<proteinExistence type="inferred from homology"/>
<geneLocation type="chloroplast"/>
<evidence type="ECO:0000255" key="1">
    <source>
        <dbReference type="HAMAP-Rule" id="MF_00482"/>
    </source>
</evidence>
<gene>
    <name evidence="1" type="primary">psaB</name>
</gene>
<name>PSAB_WHEAT</name>
<sequence length="734" mass="82585">MELRFPRFSQGLAQDPTTRRIWFGIATAHDFESHDDITEERLYQNIFASHFGQLAIIFLWTSGNLFHVAWQGNFESWIQDPLHVRPIAHAIWDPHFGQPAVEAFTRGGAAGPVNIAYSGVYQWWYTIGLRTNEDLYTGALFLLFLSTLSLIAGWLHLQPKWKPSLSWFKNAESRLNHHLSGLFGVSSLAWTGHLVHVAIPASRGEYVRWNNFLDVLPYPQGLGPLLTGQWNLYAQNPDSSNHLFGTAQGAGTAILTLLGGFHPQTQSLWLTDMAHHHLAIAFIFLIAGHMYRTNFGIGHSIKDLLEAHTPPGGRLGRGHKGLYDTINNSIHFQLGLALASLGVITSLVAQHMYSLPPYAFIAQDFTTQAALYTHHQYIAGFIMTGAFAHGAIFFIRDYNPEQNEDNVLARMLDHKEAIISHLSWASLFLGFHTLGLYVHNDVMLAFGTPEKQILIEPIFAQWIQSAHGKTTYGFDILLSSTNGPAFNAGRSLWLPGWLNAVNENSNSLFLTIGPGDFLVHHAIALGLHTTTLILVKGALDARGSKLMPDKKDFGYSFPCDGPGRGGTCDISAWDAFYLAVFWMLNTIGWVTFYWHWKHITLWQGNVSQFNESSTYLMGWLRDYLWLNSSQLINGYNPFGMNSLSVWAWMFLFGHLVWATGFMFLISWRGYWQELIETLAWAHERTPLANLIRWRDKPVALSIVQARLVGLAHFSVGYIFTYAAFLIASTSGKFG</sequence>
<protein>
    <recommendedName>
        <fullName evidence="1">Photosystem I P700 chlorophyll a apoprotein A2</fullName>
        <ecNumber evidence="1">1.97.1.12</ecNumber>
    </recommendedName>
    <alternativeName>
        <fullName evidence="1">PSI-B</fullName>
    </alternativeName>
    <alternativeName>
        <fullName evidence="1">PsaB</fullName>
    </alternativeName>
</protein>
<organism>
    <name type="scientific">Triticum aestivum</name>
    <name type="common">Wheat</name>
    <dbReference type="NCBI Taxonomy" id="4565"/>
    <lineage>
        <taxon>Eukaryota</taxon>
        <taxon>Viridiplantae</taxon>
        <taxon>Streptophyta</taxon>
        <taxon>Embryophyta</taxon>
        <taxon>Tracheophyta</taxon>
        <taxon>Spermatophyta</taxon>
        <taxon>Magnoliopsida</taxon>
        <taxon>Liliopsida</taxon>
        <taxon>Poales</taxon>
        <taxon>Poaceae</taxon>
        <taxon>BOP clade</taxon>
        <taxon>Pooideae</taxon>
        <taxon>Triticodae</taxon>
        <taxon>Triticeae</taxon>
        <taxon>Triticinae</taxon>
        <taxon>Triticum</taxon>
    </lineage>
</organism>
<dbReference type="EC" id="1.97.1.12" evidence="1"/>
<dbReference type="EMBL" id="AB042240">
    <property type="protein sequence ID" value="BAB47033.1"/>
    <property type="molecule type" value="Genomic_DNA"/>
</dbReference>
<dbReference type="RefSeq" id="NP_114258.1">
    <property type="nucleotide sequence ID" value="NC_002762.1"/>
</dbReference>
<dbReference type="SMR" id="P58386"/>
<dbReference type="STRING" id="4565.P58386"/>
<dbReference type="PaxDb" id="4565-EPlTAEP00000010048"/>
<dbReference type="EnsemblPlants" id="TraesKARUn01G0028420.1">
    <property type="protein sequence ID" value="cds.TraesKARUn01G0028420.1"/>
    <property type="gene ID" value="TraesKARUn01G0028420"/>
</dbReference>
<dbReference type="EnsemblPlants" id="TraesKARUn01G0029550.1">
    <property type="protein sequence ID" value="cds.TraesKARUn01G0029550.1"/>
    <property type="gene ID" value="TraesKARUn01G0029550"/>
</dbReference>
<dbReference type="EnsemblPlants" id="TraesKARUn01G0030020.1">
    <property type="protein sequence ID" value="cds.TraesKARUn01G0030020.1"/>
    <property type="gene ID" value="TraesKARUn01G0030020"/>
</dbReference>
<dbReference type="EnsemblPlants" id="TraesKARUn01G0030370.1">
    <property type="protein sequence ID" value="cds.TraesKARUn01G0030370.1"/>
    <property type="gene ID" value="TraesKARUn01G0030370"/>
</dbReference>
<dbReference type="EnsemblPlants" id="TraesKARUn01G0030450.1">
    <property type="protein sequence ID" value="cds.TraesKARUn01G0030450.1"/>
    <property type="gene ID" value="TraesKARUn01G0030450"/>
</dbReference>
<dbReference type="EnsemblPlants" id="TraesKARUn01G0030620.1">
    <property type="protein sequence ID" value="cds.TraesKARUn01G0030620.1"/>
    <property type="gene ID" value="TraesKARUn01G0030620"/>
</dbReference>
<dbReference type="EnsemblPlants" id="TraesKARUn01G0030820.1">
    <property type="protein sequence ID" value="cds.TraesKARUn01G0030820.1"/>
    <property type="gene ID" value="TraesKARUn01G0030820"/>
</dbReference>
<dbReference type="EnsemblPlants" id="TraesKARUn01G0032690.1">
    <property type="protein sequence ID" value="cds.TraesKARUn01G0032690.1"/>
    <property type="gene ID" value="TraesKARUn01G0032690"/>
</dbReference>
<dbReference type="EnsemblPlants" id="TraesKARUn01G0033540.1">
    <property type="protein sequence ID" value="cds.TraesKARUn01G0033540.1"/>
    <property type="gene ID" value="TraesKARUn01G0033540"/>
</dbReference>
<dbReference type="EnsemblPlants" id="TraesKARUn01G0037200.1">
    <property type="protein sequence ID" value="cds.TraesKARUn01G0037200.1"/>
    <property type="gene ID" value="TraesKARUn01G0037200"/>
</dbReference>
<dbReference type="EnsemblPlants" id="TraesKARUn01G0061450.1">
    <property type="protein sequence ID" value="cds.TraesKARUn01G0061450.1"/>
    <property type="gene ID" value="TraesKARUn01G0061450"/>
</dbReference>
<dbReference type="EnsemblPlants" id="TraesKARUn01G0061900.1">
    <property type="protein sequence ID" value="cds.TraesKARUn01G0061900.1"/>
    <property type="gene ID" value="TraesKARUn01G0061900"/>
</dbReference>
<dbReference type="EnsemblPlants" id="TraesKARUn01G0065250.1">
    <property type="protein sequence ID" value="cds.TraesKARUn01G0065250.1"/>
    <property type="gene ID" value="TraesKARUn01G0065250"/>
</dbReference>
<dbReference type="EnsemblPlants" id="TraesKARUn01G0066330.1">
    <property type="protein sequence ID" value="cds.TraesKARUn01G0066330.1"/>
    <property type="gene ID" value="TraesKARUn01G0066330"/>
</dbReference>
<dbReference type="EnsemblPlants" id="TraesKARUn01G0068080.1">
    <property type="protein sequence ID" value="cds.TraesKARUn01G0068080.1"/>
    <property type="gene ID" value="TraesKARUn01G0068080"/>
</dbReference>
<dbReference type="EnsemblPlants" id="TraesKARUn01G0068560.1">
    <property type="protein sequence ID" value="cds.TraesKARUn01G0068560.1"/>
    <property type="gene ID" value="TraesKARUn01G0068560"/>
</dbReference>
<dbReference type="EnsemblPlants" id="TraesKARUn01G0069360.1">
    <property type="protein sequence ID" value="cds.TraesKARUn01G0069360.1"/>
    <property type="gene ID" value="TraesKARUn01G0069360"/>
</dbReference>
<dbReference type="EnsemblPlants" id="TraesKARUn01G0069490.1">
    <property type="protein sequence ID" value="cds.TraesKARUn01G0069490.1"/>
    <property type="gene ID" value="TraesKARUn01G0069490"/>
</dbReference>
<dbReference type="EnsemblPlants" id="TraesKARUn01G0069940.1">
    <property type="protein sequence ID" value="cds.TraesKARUn01G0069940.1"/>
    <property type="gene ID" value="TraesKARUn01G0069940"/>
</dbReference>
<dbReference type="EnsemblPlants" id="TraesKARUn01G0070720.1">
    <property type="protein sequence ID" value="cds.TraesKARUn01G0070720.1"/>
    <property type="gene ID" value="TraesKARUn01G0070720"/>
</dbReference>
<dbReference type="EnsemblPlants" id="TraesKARUn01G0071590.1">
    <property type="protein sequence ID" value="cds.TraesKARUn01G0071590.1"/>
    <property type="gene ID" value="TraesKARUn01G0071590"/>
</dbReference>
<dbReference type="EnsemblPlants" id="TraesKARUn01G0072080.1">
    <property type="protein sequence ID" value="cds.TraesKARUn01G0072080.1"/>
    <property type="gene ID" value="TraesKARUn01G0072080"/>
</dbReference>
<dbReference type="EnsemblPlants" id="TraesKARUn01G0072680.1">
    <property type="protein sequence ID" value="cds.TraesKARUn01G0072680.1"/>
    <property type="gene ID" value="TraesKARUn01G0072680"/>
</dbReference>
<dbReference type="EnsemblPlants" id="TraesKARUn01G0073260.1">
    <property type="protein sequence ID" value="cds.TraesKARUn01G0073260.1"/>
    <property type="gene ID" value="TraesKARUn01G0073260"/>
</dbReference>
<dbReference type="EnsemblPlants" id="TraesKARUn01G0076070.1">
    <property type="protein sequence ID" value="cds.TraesKARUn01G0076070.1"/>
    <property type="gene ID" value="TraesKARUn01G0076070"/>
</dbReference>
<dbReference type="EnsemblPlants" id="TraesKARUn01G0077140.1">
    <property type="protein sequence ID" value="cds.TraesKARUn01G0077140.1"/>
    <property type="gene ID" value="TraesKARUn01G0077140"/>
</dbReference>
<dbReference type="EnsemblPlants" id="TraesKARUn01G0077630.1">
    <property type="protein sequence ID" value="cds.TraesKARUn01G0077630.1"/>
    <property type="gene ID" value="TraesKARUn01G0077630"/>
</dbReference>
<dbReference type="EnsemblPlants" id="TraesKARUn01G0077950.1">
    <property type="protein sequence ID" value="cds.TraesKARUn01G0077950.1"/>
    <property type="gene ID" value="TraesKARUn01G0077950"/>
</dbReference>
<dbReference type="EnsemblPlants" id="TraesKARUn01G0078290.1">
    <property type="protein sequence ID" value="cds.TraesKARUn01G0078290.1"/>
    <property type="gene ID" value="TraesKARUn01G0078290"/>
</dbReference>
<dbReference type="EnsemblPlants" id="TraesKARUn01G0078900.1">
    <property type="protein sequence ID" value="cds.TraesKARUn01G0078900.1"/>
    <property type="gene ID" value="TraesKARUn01G0078900"/>
</dbReference>
<dbReference type="EnsemblPlants" id="TraesKARUn01G0079000.1">
    <property type="protein sequence ID" value="cds.TraesKARUn01G0079000.1"/>
    <property type="gene ID" value="TraesKARUn01G0079000"/>
</dbReference>
<dbReference type="EnsemblPlants" id="TraesKARUn01G0079590.1">
    <property type="protein sequence ID" value="cds.TraesKARUn01G0079590.1"/>
    <property type="gene ID" value="TraesKARUn01G0079590"/>
</dbReference>
<dbReference type="EnsemblPlants" id="TraesKARUn01G0080090.1">
    <property type="protein sequence ID" value="cds.TraesKARUn01G0080090.1"/>
    <property type="gene ID" value="TraesKARUn01G0080090"/>
</dbReference>
<dbReference type="EnsemblPlants" id="TraesKARUn01G0081750.1">
    <property type="protein sequence ID" value="cds.TraesKARUn01G0081750.1"/>
    <property type="gene ID" value="TraesKARUn01G0081750"/>
</dbReference>
<dbReference type="EnsemblPlants" id="TraesKARUn01G0081940.1">
    <property type="protein sequence ID" value="cds.TraesKARUn01G0081940.1"/>
    <property type="gene ID" value="TraesKARUn01G0081940"/>
</dbReference>
<dbReference type="EnsemblPlants" id="TraesKARUn01G0082060.1">
    <property type="protein sequence ID" value="cds.TraesKARUn01G0082060.1"/>
    <property type="gene ID" value="TraesKARUn01G0082060"/>
</dbReference>
<dbReference type="EnsemblPlants" id="TraesKARUn01G0083130.1">
    <property type="protein sequence ID" value="cds.TraesKARUn01G0083130.1"/>
    <property type="gene ID" value="TraesKARUn01G0083130"/>
</dbReference>
<dbReference type="EnsemblPlants" id="TraesKARUn01G0083480.1">
    <property type="protein sequence ID" value="cds.TraesKARUn01G0083480.1"/>
    <property type="gene ID" value="TraesKARUn01G0083480"/>
</dbReference>
<dbReference type="EnsemblPlants" id="TraesKARUn01G0084360.1">
    <property type="protein sequence ID" value="cds.TraesKARUn01G0084360.1"/>
    <property type="gene ID" value="TraesKARUn01G0084360"/>
</dbReference>
<dbReference type="EnsemblPlants" id="TraesKARUn01G0084520.1">
    <property type="protein sequence ID" value="cds.TraesKARUn01G0084520.1"/>
    <property type="gene ID" value="TraesKARUn01G0084520"/>
</dbReference>
<dbReference type="EnsemblPlants" id="TraesKARUn01G0086100.1">
    <property type="protein sequence ID" value="cds.TraesKARUn01G0086100.1"/>
    <property type="gene ID" value="TraesKARUn01G0086100"/>
</dbReference>
<dbReference type="EnsemblPlants" id="TraesKARUn01G0086950.1">
    <property type="protein sequence ID" value="cds.TraesKARUn01G0086950.1"/>
    <property type="gene ID" value="TraesKARUn01G0086950"/>
</dbReference>
<dbReference type="EnsemblPlants" id="TraesKARUn01G0087270.1">
    <property type="protein sequence ID" value="cds.TraesKARUn01G0087270.1"/>
    <property type="gene ID" value="TraesKARUn01G0087270"/>
</dbReference>
<dbReference type="EnsemblPlants" id="TraesKARUn01G0087930.1">
    <property type="protein sequence ID" value="cds.TraesKARUn01G0087930.1"/>
    <property type="gene ID" value="TraesKARUn01G0087930"/>
</dbReference>
<dbReference type="EnsemblPlants" id="TraesKARUn01G0088240.1">
    <property type="protein sequence ID" value="cds.TraesKARUn01G0088240.1"/>
    <property type="gene ID" value="TraesKARUn01G0088240"/>
</dbReference>
<dbReference type="EnsemblPlants" id="TraesKARUn01G0089270.1">
    <property type="protein sequence ID" value="cds.TraesKARUn01G0089270.1"/>
    <property type="gene ID" value="TraesKARUn01G0089270"/>
</dbReference>
<dbReference type="EnsemblPlants" id="TraesKARUn01G0089600.1">
    <property type="protein sequence ID" value="cds.TraesKARUn01G0089600.1"/>
    <property type="gene ID" value="TraesKARUn01G0089600"/>
</dbReference>
<dbReference type="EnsemblPlants" id="TraesKARUn01G0089850.1">
    <property type="protein sequence ID" value="cds.TraesKARUn01G0089850.1"/>
    <property type="gene ID" value="TraesKARUn01G0089850"/>
</dbReference>
<dbReference type="EnsemblPlants" id="TraesKARUn01G0090800.1">
    <property type="protein sequence ID" value="cds.TraesKARUn01G0090800.1"/>
    <property type="gene ID" value="TraesKARUn01G0090800"/>
</dbReference>
<dbReference type="EnsemblPlants" id="TraesKARUn01G0090840.1">
    <property type="protein sequence ID" value="cds.TraesKARUn01G0090840.1"/>
    <property type="gene ID" value="TraesKARUn01G0090840"/>
</dbReference>
<dbReference type="EnsemblPlants" id="TraesKARUn01G0090990.1">
    <property type="protein sequence ID" value="cds.TraesKARUn01G0090990.1"/>
    <property type="gene ID" value="TraesKARUn01G0090990"/>
</dbReference>
<dbReference type="EnsemblPlants" id="TraesKARUn01G0092150.1">
    <property type="protein sequence ID" value="cds.TraesKARUn01G0092150.1"/>
    <property type="gene ID" value="TraesKARUn01G0092150"/>
</dbReference>
<dbReference type="EnsemblPlants" id="TraesKARUn01G0092400.1">
    <property type="protein sequence ID" value="cds.TraesKARUn01G0092400.1"/>
    <property type="gene ID" value="TraesKARUn01G0092400"/>
</dbReference>
<dbReference type="EnsemblPlants" id="TraesKARUn01G0093520.1">
    <property type="protein sequence ID" value="cds.TraesKARUn01G0093520.1"/>
    <property type="gene ID" value="TraesKARUn01G0093520"/>
</dbReference>
<dbReference type="EnsemblPlants" id="TraesKARUn01G0094980.1">
    <property type="protein sequence ID" value="cds.TraesKARUn01G0094980.1"/>
    <property type="gene ID" value="TraesKARUn01G0094980"/>
</dbReference>
<dbReference type="EnsemblPlants" id="TraesKARUn01G0095650.1">
    <property type="protein sequence ID" value="cds.TraesKARUn01G0095650.1"/>
    <property type="gene ID" value="TraesKARUn01G0095650"/>
</dbReference>
<dbReference type="EnsemblPlants" id="TraesKARUn01G0095840.1">
    <property type="protein sequence ID" value="cds.TraesKARUn01G0095840.1"/>
    <property type="gene ID" value="TraesKARUn01G0095840"/>
</dbReference>
<dbReference type="EnsemblPlants" id="TraesKARUn01G0096590.1">
    <property type="protein sequence ID" value="cds.TraesKARUn01G0096590.1"/>
    <property type="gene ID" value="TraesKARUn01G0096590"/>
</dbReference>
<dbReference type="EnsemblPlants" id="TraesKARUn01G0096980.1">
    <property type="protein sequence ID" value="cds.TraesKARUn01G0096980.1"/>
    <property type="gene ID" value="TraesKARUn01G0096980"/>
</dbReference>
<dbReference type="EnsemblPlants" id="TraesKARUn01G0097000.1">
    <property type="protein sequence ID" value="cds.TraesKARUn01G0097000.1"/>
    <property type="gene ID" value="TraesKARUn01G0097000"/>
</dbReference>
<dbReference type="EnsemblPlants" id="TraesKARUn01G0097200.1">
    <property type="protein sequence ID" value="cds.TraesKARUn01G0097200.1"/>
    <property type="gene ID" value="TraesKARUn01G0097200"/>
</dbReference>
<dbReference type="EnsemblPlants" id="TraesKARUn01G0097510.1">
    <property type="protein sequence ID" value="cds.TraesKARUn01G0097510.1"/>
    <property type="gene ID" value="TraesKARUn01G0097510"/>
</dbReference>
<dbReference type="EnsemblPlants" id="TraesKARUn01G0097690.1">
    <property type="protein sequence ID" value="cds.TraesKARUn01G0097690.1"/>
    <property type="gene ID" value="TraesKARUn01G0097690"/>
</dbReference>
<dbReference type="EnsemblPlants" id="TraesKARUn01G0097980.1">
    <property type="protein sequence ID" value="cds.TraesKARUn01G0097980.1"/>
    <property type="gene ID" value="TraesKARUn01G0097980"/>
</dbReference>
<dbReference type="EnsemblPlants" id="TraesKARUn01G0098080.1">
    <property type="protein sequence ID" value="cds.TraesKARUn01G0098080.1"/>
    <property type="gene ID" value="TraesKARUn01G0098080"/>
</dbReference>
<dbReference type="EnsemblPlants" id="TraesKARUn01G0098640.1">
    <property type="protein sequence ID" value="cds.TraesKARUn01G0098640.1"/>
    <property type="gene ID" value="TraesKARUn01G0098640"/>
</dbReference>
<dbReference type="EnsemblPlants" id="TraesKARUn01G0098720.1">
    <property type="protein sequence ID" value="cds.TraesKARUn01G0098720.1"/>
    <property type="gene ID" value="TraesKARUn01G0098720"/>
</dbReference>
<dbReference type="EnsemblPlants" id="TraesKARUn01G0100070.1">
    <property type="protein sequence ID" value="cds.TraesKARUn01G0100070.1"/>
    <property type="gene ID" value="TraesKARUn01G0100070"/>
</dbReference>
<dbReference type="EnsemblPlants" id="TraesKARUn01G0100580.1">
    <property type="protein sequence ID" value="cds.TraesKARUn01G0100580.1"/>
    <property type="gene ID" value="TraesKARUn01G0100580"/>
</dbReference>
<dbReference type="EnsemblPlants" id="TraesKARUn01G0101130.1">
    <property type="protein sequence ID" value="cds.TraesKARUn01G0101130.1"/>
    <property type="gene ID" value="TraesKARUn01G0101130"/>
</dbReference>
<dbReference type="EnsemblPlants" id="TraesKARUn01G0102180.1">
    <property type="protein sequence ID" value="cds.TraesKARUn01G0102180.1"/>
    <property type="gene ID" value="TraesKARUn01G0102180"/>
</dbReference>
<dbReference type="EnsemblPlants" id="TraesKARUn01G0102350.1">
    <property type="protein sequence ID" value="cds.TraesKARUn01G0102350.1"/>
    <property type="gene ID" value="TraesKARUn01G0102350"/>
</dbReference>
<dbReference type="EnsemblPlants" id="TraesKARUn01G0102500.1">
    <property type="protein sequence ID" value="cds.TraesKARUn01G0102500.1"/>
    <property type="gene ID" value="TraesKARUn01G0102500"/>
</dbReference>
<dbReference type="EnsemblPlants" id="TraesKARUn01G0102870.1">
    <property type="protein sequence ID" value="cds.TraesKARUn01G0102870.1"/>
    <property type="gene ID" value="TraesKARUn01G0102870"/>
</dbReference>
<dbReference type="EnsemblPlants" id="TraesKARUn01G0103910.1">
    <property type="protein sequence ID" value="cds.TraesKARUn01G0103910.1"/>
    <property type="gene ID" value="TraesKARUn01G0103910"/>
</dbReference>
<dbReference type="EnsemblPlants" id="TraesKARUn01G0104160.1">
    <property type="protein sequence ID" value="cds.TraesKARUn01G0104160.1"/>
    <property type="gene ID" value="TraesKARUn01G0104160"/>
</dbReference>
<dbReference type="EnsemblPlants" id="TraesKARUn01G0104190.1">
    <property type="protein sequence ID" value="cds.TraesKARUn01G0104190.1"/>
    <property type="gene ID" value="TraesKARUn01G0104190"/>
</dbReference>
<dbReference type="EnsemblPlants" id="TraesKARUn01G0104330.1">
    <property type="protein sequence ID" value="cds.TraesKARUn01G0104330.1"/>
    <property type="gene ID" value="TraesKARUn01G0104330"/>
</dbReference>
<dbReference type="EnsemblPlants" id="TraesKARUn01G0104410.1">
    <property type="protein sequence ID" value="cds.TraesKARUn01G0104410.1"/>
    <property type="gene ID" value="TraesKARUn01G0104410"/>
</dbReference>
<dbReference type="EnsemblPlants" id="TraesKARUn01G0104840.1">
    <property type="protein sequence ID" value="cds.TraesKARUn01G0104840.1"/>
    <property type="gene ID" value="TraesKARUn01G0104840"/>
</dbReference>
<dbReference type="EnsemblPlants" id="TraesKARUn01G0104920.1">
    <property type="protein sequence ID" value="cds.TraesKARUn01G0104920.1"/>
    <property type="gene ID" value="TraesKARUn01G0104920"/>
</dbReference>
<dbReference type="EnsemblPlants" id="TraesKARUn01G0105930.1">
    <property type="protein sequence ID" value="cds.TraesKARUn01G0105930.1"/>
    <property type="gene ID" value="TraesKARUn01G0105930"/>
</dbReference>
<dbReference type="EnsemblPlants" id="TraesKARUn01G0106010.1">
    <property type="protein sequence ID" value="cds.TraesKARUn01G0106010.1"/>
    <property type="gene ID" value="TraesKARUn01G0106010"/>
</dbReference>
<dbReference type="EnsemblPlants" id="TraesKARUn01G0106450.1">
    <property type="protein sequence ID" value="cds.TraesKARUn01G0106450.1"/>
    <property type="gene ID" value="TraesKARUn01G0106450"/>
</dbReference>
<dbReference type="EnsemblPlants" id="TraesKARUn01G0106880.1">
    <property type="protein sequence ID" value="cds.TraesKARUn01G0106880.1"/>
    <property type="gene ID" value="TraesKARUn01G0106880"/>
</dbReference>
<dbReference type="EnsemblPlants" id="TraesKARUn01G0107260.1">
    <property type="protein sequence ID" value="cds.TraesKARUn01G0107260.1"/>
    <property type="gene ID" value="TraesKARUn01G0107260"/>
</dbReference>
<dbReference type="EnsemblPlants" id="TraesKARUn01G0107640.1">
    <property type="protein sequence ID" value="cds.TraesKARUn01G0107640.1"/>
    <property type="gene ID" value="TraesKARUn01G0107640"/>
</dbReference>
<dbReference type="EnsemblPlants" id="TraesKARUn01G0107970.1">
    <property type="protein sequence ID" value="cds.TraesKARUn01G0107970.1"/>
    <property type="gene ID" value="TraesKARUn01G0107970"/>
</dbReference>
<dbReference type="EnsemblPlants" id="TraesKARUn01G0108820.1">
    <property type="protein sequence ID" value="cds.TraesKARUn01G0108820.1"/>
    <property type="gene ID" value="TraesKARUn01G0108820"/>
</dbReference>
<dbReference type="EnsemblPlants" id="TraesKARUn01G0108890.1">
    <property type="protein sequence ID" value="cds.TraesKARUn01G0108890.1"/>
    <property type="gene ID" value="TraesKARUn01G0108890"/>
</dbReference>
<dbReference type="EnsemblPlants" id="TraesKARUn01G0109470.1">
    <property type="protein sequence ID" value="cds.TraesKARUn01G0109470.1"/>
    <property type="gene ID" value="TraesKARUn01G0109470"/>
</dbReference>
<dbReference type="EnsemblPlants" id="TraesKARUn01G0109760.1">
    <property type="protein sequence ID" value="cds.TraesKARUn01G0109760.1"/>
    <property type="gene ID" value="TraesKARUn01G0109760"/>
</dbReference>
<dbReference type="EnsemblPlants" id="TraesKARUn01G0110160.1">
    <property type="protein sequence ID" value="cds.TraesKARUn01G0110160.1"/>
    <property type="gene ID" value="TraesKARUn01G0110160"/>
</dbReference>
<dbReference type="EnsemblPlants" id="TraesKARUn01G0110550.1">
    <property type="protein sequence ID" value="cds.TraesKARUn01G0110550.1"/>
    <property type="gene ID" value="TraesKARUn01G0110550"/>
</dbReference>
<dbReference type="EnsemblPlants" id="TraesKARUn01G0111330.1">
    <property type="protein sequence ID" value="cds.TraesKARUn01G0111330.1"/>
    <property type="gene ID" value="TraesKARUn01G0111330"/>
</dbReference>
<dbReference type="EnsemblPlants" id="TraesKARUn01G0111950.1">
    <property type="protein sequence ID" value="cds.TraesKARUn01G0111950.1"/>
    <property type="gene ID" value="TraesKARUn01G0111950"/>
</dbReference>
<dbReference type="EnsemblPlants" id="TraesKARUn01G0112010.1">
    <property type="protein sequence ID" value="cds.TraesKARUn01G0112010.1"/>
    <property type="gene ID" value="TraesKARUn01G0112010"/>
</dbReference>
<dbReference type="EnsemblPlants" id="TraesKARUn01G0112320.1">
    <property type="protein sequence ID" value="cds.TraesKARUn01G0112320.1"/>
    <property type="gene ID" value="TraesKARUn01G0112320"/>
</dbReference>
<dbReference type="EnsemblPlants" id="TraesKARUn01G0112920.1">
    <property type="protein sequence ID" value="cds.TraesKARUn01G0112920.1"/>
    <property type="gene ID" value="TraesKARUn01G0112920"/>
</dbReference>
<dbReference type="EnsemblPlants" id="TraesKARUn01G0113840.1">
    <property type="protein sequence ID" value="cds.TraesKARUn01G0113840.1"/>
    <property type="gene ID" value="TraesKARUn01G0113840"/>
</dbReference>
<dbReference type="EnsemblPlants" id="TraesKARUn01G0114350.1">
    <property type="protein sequence ID" value="cds.TraesKARUn01G0114350.1"/>
    <property type="gene ID" value="TraesKARUn01G0114350"/>
</dbReference>
<dbReference type="EnsemblPlants" id="TraesKARUn01G0115360.1">
    <property type="protein sequence ID" value="cds.TraesKARUn01G0115360.1"/>
    <property type="gene ID" value="TraesKARUn01G0115360"/>
</dbReference>
<dbReference type="EnsemblPlants" id="TraesKARUn01G0116110.1">
    <property type="protein sequence ID" value="cds.TraesKARUn01G0116110.1"/>
    <property type="gene ID" value="TraesKARUn01G0116110"/>
</dbReference>
<dbReference type="EnsemblPlants" id="TraesKARUn01G0116360.1">
    <property type="protein sequence ID" value="cds.TraesKARUn01G0116360.1"/>
    <property type="gene ID" value="TraesKARUn01G0116360"/>
</dbReference>
<dbReference type="EnsemblPlants" id="TraesKARUn01G0116430.1">
    <property type="protein sequence ID" value="cds.TraesKARUn01G0116430.1"/>
    <property type="gene ID" value="TraesKARUn01G0116430"/>
</dbReference>
<dbReference type="EnsemblPlants" id="TraesKARUn01G0117930.1">
    <property type="protein sequence ID" value="cds.TraesKARUn01G0117930.1"/>
    <property type="gene ID" value="TraesKARUn01G0117930"/>
</dbReference>
<dbReference type="EnsemblPlants" id="TraesKARUn01G0118410.1">
    <property type="protein sequence ID" value="cds.TraesKARUn01G0118410.1"/>
    <property type="gene ID" value="TraesKARUn01G0118410"/>
</dbReference>
<dbReference type="EnsemblPlants" id="TraesKARUn01G0118540.1">
    <property type="protein sequence ID" value="cds.TraesKARUn01G0118540.1"/>
    <property type="gene ID" value="TraesKARUn01G0118540"/>
</dbReference>
<dbReference type="EnsemblPlants" id="TraesKARUn01G0119900.1">
    <property type="protein sequence ID" value="cds.TraesKARUn01G0119900.1"/>
    <property type="gene ID" value="TraesKARUn01G0119900"/>
</dbReference>
<dbReference type="EnsemblPlants" id="TraesKARUn01G0120260.1">
    <property type="protein sequence ID" value="cds.TraesKARUn01G0120260.1"/>
    <property type="gene ID" value="TraesKARUn01G0120260"/>
</dbReference>
<dbReference type="EnsemblPlants" id="TraesKARUn01G0120890.1">
    <property type="protein sequence ID" value="cds.TraesKARUn01G0120890.1"/>
    <property type="gene ID" value="TraesKARUn01G0120890"/>
</dbReference>
<dbReference type="EnsemblPlants" id="TraesKARUn01G0120970.1">
    <property type="protein sequence ID" value="cds.TraesKARUn01G0120970.1"/>
    <property type="gene ID" value="TraesKARUn01G0120970"/>
</dbReference>
<dbReference type="EnsemblPlants" id="TraesKARUn01G0121230.1">
    <property type="protein sequence ID" value="cds.TraesKARUn01G0121230.1"/>
    <property type="gene ID" value="TraesKARUn01G0121230"/>
</dbReference>
<dbReference type="EnsemblPlants" id="TraesKARUn01G0121270.1">
    <property type="protein sequence ID" value="cds.TraesKARUn01G0121270.1"/>
    <property type="gene ID" value="TraesKARUn01G0121270"/>
</dbReference>
<dbReference type="EnsemblPlants" id="TraesKARUn01G0121650.1">
    <property type="protein sequence ID" value="cds.TraesKARUn01G0121650.1"/>
    <property type="gene ID" value="TraesKARUn01G0121650"/>
</dbReference>
<dbReference type="EnsemblPlants" id="TraesKARUn01G0121850.1">
    <property type="protein sequence ID" value="cds.TraesKARUn01G0121850.1"/>
    <property type="gene ID" value="TraesKARUn01G0121850"/>
</dbReference>
<dbReference type="EnsemblPlants" id="TraesKARUn01G0122130.1">
    <property type="protein sequence ID" value="cds.TraesKARUn01G0122130.1"/>
    <property type="gene ID" value="TraesKARUn01G0122130"/>
</dbReference>
<dbReference type="EnsemblPlants" id="TraesKARUn01G0122180.1">
    <property type="protein sequence ID" value="cds.TraesKARUn01G0122180.1"/>
    <property type="gene ID" value="TraesKARUn01G0122180"/>
</dbReference>
<dbReference type="EnsemblPlants" id="TraesKARUn01G0122280.1">
    <property type="protein sequence ID" value="cds.TraesKARUn01G0122280.1"/>
    <property type="gene ID" value="TraesKARUn01G0122280"/>
</dbReference>
<dbReference type="EnsemblPlants" id="TraesKARUn01G0123530.1">
    <property type="protein sequence ID" value="cds.TraesKARUn01G0123530.1"/>
    <property type="gene ID" value="TraesKARUn01G0123530"/>
</dbReference>
<dbReference type="EnsemblPlants" id="TraesKARUn01G0123740.1">
    <property type="protein sequence ID" value="cds.TraesKARUn01G0123740.1"/>
    <property type="gene ID" value="TraesKARUn01G0123740"/>
</dbReference>
<dbReference type="EnsemblPlants" id="TraesKARUn01G0124210.1">
    <property type="protein sequence ID" value="cds.TraesKARUn01G0124210.1"/>
    <property type="gene ID" value="TraesKARUn01G0124210"/>
</dbReference>
<dbReference type="EnsemblPlants" id="TraesKARUn01G0124630.1">
    <property type="protein sequence ID" value="cds.TraesKARUn01G0124630.1"/>
    <property type="gene ID" value="TraesKARUn01G0124630"/>
</dbReference>
<dbReference type="EnsemblPlants" id="TraesKARUn01G0124800.1">
    <property type="protein sequence ID" value="cds.TraesKARUn01G0124800.1"/>
    <property type="gene ID" value="TraesKARUn01G0124800"/>
</dbReference>
<dbReference type="EnsemblPlants" id="TraesKARUn01G0124960.1">
    <property type="protein sequence ID" value="cds.TraesKARUn01G0124960.1"/>
    <property type="gene ID" value="TraesKARUn01G0124960"/>
</dbReference>
<dbReference type="EnsemblPlants" id="TraesKARUn01G0125060.1">
    <property type="protein sequence ID" value="cds.TraesKARUn01G0125060.1"/>
    <property type="gene ID" value="TraesKARUn01G0125060"/>
</dbReference>
<dbReference type="EnsemblPlants" id="TraesKARUn01G0125160.1">
    <property type="protein sequence ID" value="cds.TraesKARUn01G0125160.1"/>
    <property type="gene ID" value="TraesKARUn01G0125160"/>
</dbReference>
<dbReference type="EnsemblPlants" id="TraesKARUn01G0125420.1">
    <property type="protein sequence ID" value="cds.TraesKARUn01G0125420.1"/>
    <property type="gene ID" value="TraesKARUn01G0125420"/>
</dbReference>
<dbReference type="EnsemblPlants" id="TraesKARUn01G0125520.1">
    <property type="protein sequence ID" value="cds.TraesKARUn01G0125520.1"/>
    <property type="gene ID" value="TraesKARUn01G0125520"/>
</dbReference>
<dbReference type="EnsemblPlants" id="TraesKARUn01G0126060.1">
    <property type="protein sequence ID" value="cds.TraesKARUn01G0126060.1"/>
    <property type="gene ID" value="TraesKARUn01G0126060"/>
</dbReference>
<dbReference type="EnsemblPlants" id="TraesKARUn01G0126210.1">
    <property type="protein sequence ID" value="cds.TraesKARUn01G0126210.1"/>
    <property type="gene ID" value="TraesKARUn01G0126210"/>
</dbReference>
<dbReference type="EnsemblPlants" id="TraesKARUn01G0126410.1">
    <property type="protein sequence ID" value="cds.TraesKARUn01G0126410.1"/>
    <property type="gene ID" value="TraesKARUn01G0126410"/>
</dbReference>
<dbReference type="EnsemblPlants" id="TraesKARUn01G0128070.1">
    <property type="protein sequence ID" value="cds.TraesKARUn01G0128070.1"/>
    <property type="gene ID" value="TraesKARUn01G0128070"/>
</dbReference>
<dbReference type="EnsemblPlants" id="TraesKARUn01G0128130.1">
    <property type="protein sequence ID" value="cds.TraesKARUn01G0128130.1"/>
    <property type="gene ID" value="TraesKARUn01G0128130"/>
</dbReference>
<dbReference type="EnsemblPlants" id="TraesKARUn01G0128460.1">
    <property type="protein sequence ID" value="cds.TraesKARUn01G0128460.1"/>
    <property type="gene ID" value="TraesKARUn01G0128460"/>
</dbReference>
<dbReference type="EnsemblPlants" id="TraesKARUn01G0128730.1">
    <property type="protein sequence ID" value="cds.TraesKARUn01G0128730.1"/>
    <property type="gene ID" value="TraesKARUn01G0128730"/>
</dbReference>
<dbReference type="EnsemblPlants" id="TraesKARUn01G0128910.1">
    <property type="protein sequence ID" value="cds.TraesKARUn01G0128910.1"/>
    <property type="gene ID" value="TraesKARUn01G0128910"/>
</dbReference>
<dbReference type="EnsemblPlants" id="TraesKARUn01G0128980.1">
    <property type="protein sequence ID" value="cds.TraesKARUn01G0128980.1"/>
    <property type="gene ID" value="TraesKARUn01G0128980"/>
</dbReference>
<dbReference type="EnsemblPlants" id="TraesKARUn01G0129280.1">
    <property type="protein sequence ID" value="cds.TraesKARUn01G0129280.1"/>
    <property type="gene ID" value="TraesKARUn01G0129280"/>
</dbReference>
<dbReference type="EnsemblPlants" id="TraesKARUn01G0130050.1">
    <property type="protein sequence ID" value="cds.TraesKARUn01G0130050.1"/>
    <property type="gene ID" value="TraesKARUn01G0130050"/>
</dbReference>
<dbReference type="EnsemblPlants" id="TraesKARUn01G0132370.1">
    <property type="protein sequence ID" value="cds.TraesKARUn01G0132370.1"/>
    <property type="gene ID" value="TraesKARUn01G0132370"/>
</dbReference>
<dbReference type="EnsemblPlants" id="TraesKARUn01G0133030.1">
    <property type="protein sequence ID" value="cds.TraesKARUn01G0133030.1"/>
    <property type="gene ID" value="TraesKARUn01G0133030"/>
</dbReference>
<dbReference type="EnsemblPlants" id="TraesKARUn01G0133500.1">
    <property type="protein sequence ID" value="cds.TraesKARUn01G0133500.1"/>
    <property type="gene ID" value="TraesKARUn01G0133500"/>
</dbReference>
<dbReference type="EnsemblPlants" id="TraesKARUn01G0134260.1">
    <property type="protein sequence ID" value="cds.TraesKARUn01G0134260.1"/>
    <property type="gene ID" value="TraesKARUn01G0134260"/>
</dbReference>
<dbReference type="EnsemblPlants" id="TraesKARUn01G0134770.1">
    <property type="protein sequence ID" value="cds.TraesKARUn01G0134770.1"/>
    <property type="gene ID" value="TraesKARUn01G0134770"/>
</dbReference>
<dbReference type="EnsemblPlants" id="TraesKARUn01G0134870.1">
    <property type="protein sequence ID" value="cds.TraesKARUn01G0134870.1"/>
    <property type="gene ID" value="TraesKARUn01G0134870"/>
</dbReference>
<dbReference type="EnsemblPlants" id="TraesKARUn01G0135050.1">
    <property type="protein sequence ID" value="cds.TraesKARUn01G0135050.1"/>
    <property type="gene ID" value="TraesKARUn01G0135050"/>
</dbReference>
<dbReference type="EnsemblPlants" id="TraesKARUn01G0135150.1">
    <property type="protein sequence ID" value="cds.TraesKARUn01G0135150.1"/>
    <property type="gene ID" value="TraesKARUn01G0135150"/>
</dbReference>
<dbReference type="EnsemblPlants" id="TraesKARUn01G0135350.1">
    <property type="protein sequence ID" value="cds.TraesKARUn01G0135350.1"/>
    <property type="gene ID" value="TraesKARUn01G0135350"/>
</dbReference>
<dbReference type="EnsemblPlants" id="TraesKARUn01G0135510.1">
    <property type="protein sequence ID" value="cds.TraesKARUn01G0135510.1"/>
    <property type="gene ID" value="TraesKARUn01G0135510"/>
</dbReference>
<dbReference type="EnsemblPlants" id="TraesKARUn01G0135720.1">
    <property type="protein sequence ID" value="cds.TraesKARUn01G0135720.1"/>
    <property type="gene ID" value="TraesKARUn01G0135720"/>
</dbReference>
<dbReference type="EnsemblPlants" id="TraesKARUn01G0136050.1">
    <property type="protein sequence ID" value="cds.TraesKARUn01G0136050.1"/>
    <property type="gene ID" value="TraesKARUn01G0136050"/>
</dbReference>
<dbReference type="EnsemblPlants" id="TraesKARUn01G0136450.1">
    <property type="protein sequence ID" value="cds.TraesKARUn01G0136450.1"/>
    <property type="gene ID" value="TraesKARUn01G0136450"/>
</dbReference>
<dbReference type="EnsemblPlants" id="TraesKARUn01G0137290.1">
    <property type="protein sequence ID" value="cds.TraesKARUn01G0137290.1"/>
    <property type="gene ID" value="TraesKARUn01G0137290"/>
</dbReference>
<dbReference type="EnsemblPlants" id="TraesKARUn01G0137400.1">
    <property type="protein sequence ID" value="cds.TraesKARUn01G0137400.1"/>
    <property type="gene ID" value="TraesKARUn01G0137400"/>
</dbReference>
<dbReference type="EnsemblPlants" id="TraesKARUn01G0137920.1">
    <property type="protein sequence ID" value="cds.TraesKARUn01G0137920.1"/>
    <property type="gene ID" value="TraesKARUn01G0137920"/>
</dbReference>
<dbReference type="EnsemblPlants" id="TraesKARUn01G0139070.1">
    <property type="protein sequence ID" value="cds.TraesKARUn01G0139070.1"/>
    <property type="gene ID" value="TraesKARUn01G0139070"/>
</dbReference>
<dbReference type="EnsemblPlants" id="TraesKARUn01G0139990.1">
    <property type="protein sequence ID" value="cds.TraesKARUn01G0139990.1"/>
    <property type="gene ID" value="TraesKARUn01G0139990"/>
</dbReference>
<dbReference type="EnsemblPlants" id="TraesKARUn01G0140420.1">
    <property type="protein sequence ID" value="cds.TraesKARUn01G0140420.1"/>
    <property type="gene ID" value="TraesKARUn01G0140420"/>
</dbReference>
<dbReference type="EnsemblPlants" id="TraesKARUn01G0141170.1">
    <property type="protein sequence ID" value="cds.TraesKARUn01G0141170.1"/>
    <property type="gene ID" value="TraesKARUn01G0141170"/>
</dbReference>
<dbReference type="EnsemblPlants" id="TraesKARUn01G0141470.1">
    <property type="protein sequence ID" value="cds.TraesKARUn01G0141470.1"/>
    <property type="gene ID" value="TraesKARUn01G0141470"/>
</dbReference>
<dbReference type="EnsemblPlants" id="TraesKARUn01G0142010.1">
    <property type="protein sequence ID" value="cds.TraesKARUn01G0142010.1"/>
    <property type="gene ID" value="TraesKARUn01G0142010"/>
</dbReference>
<dbReference type="EnsemblPlants" id="TraesKARUn01G0142210.1">
    <property type="protein sequence ID" value="cds.TraesKARUn01G0142210.1"/>
    <property type="gene ID" value="TraesKARUn01G0142210"/>
</dbReference>
<dbReference type="EnsemblPlants" id="TraesKARUn01G0142390.1">
    <property type="protein sequence ID" value="cds.TraesKARUn01G0142390.1"/>
    <property type="gene ID" value="TraesKARUn01G0142390"/>
</dbReference>
<dbReference type="EnsemblPlants" id="TraesKARUn01G0142710.1">
    <property type="protein sequence ID" value="cds.TraesKARUn01G0142710.1"/>
    <property type="gene ID" value="TraesKARUn01G0142710"/>
</dbReference>
<dbReference type="EnsemblPlants" id="TraesKARUn01G0143160.1">
    <property type="protein sequence ID" value="cds.TraesKARUn01G0143160.1"/>
    <property type="gene ID" value="TraesKARUn01G0143160"/>
</dbReference>
<dbReference type="EnsemblPlants" id="TraesKARUn01G0143370.1">
    <property type="protein sequence ID" value="cds.TraesKARUn01G0143370.1"/>
    <property type="gene ID" value="TraesKARUn01G0143370"/>
</dbReference>
<dbReference type="EnsemblPlants" id="TraesKARUn01G0143440.1">
    <property type="protein sequence ID" value="cds.TraesKARUn01G0143440.1"/>
    <property type="gene ID" value="TraesKARUn01G0143440"/>
</dbReference>
<dbReference type="EnsemblPlants" id="TraesKARUn01G0143560.1">
    <property type="protein sequence ID" value="cds.TraesKARUn01G0143560.1"/>
    <property type="gene ID" value="TraesKARUn01G0143560"/>
</dbReference>
<dbReference type="EnsemblPlants" id="TraesKARUn01G0143670.1">
    <property type="protein sequence ID" value="cds.TraesKARUn01G0143670.1"/>
    <property type="gene ID" value="TraesKARUn01G0143670"/>
</dbReference>
<dbReference type="EnsemblPlants" id="TraesKARUn01G0143880.1">
    <property type="protein sequence ID" value="cds.TraesKARUn01G0143880.1"/>
    <property type="gene ID" value="TraesKARUn01G0143880"/>
</dbReference>
<dbReference type="EnsemblPlants" id="TraesKARUn01G0144430.1">
    <property type="protein sequence ID" value="cds.TraesKARUn01G0144430.1"/>
    <property type="gene ID" value="TraesKARUn01G0144430"/>
</dbReference>
<dbReference type="EnsemblPlants" id="TraesKARUn01G0144480.1">
    <property type="protein sequence ID" value="cds.TraesKARUn01G0144480.1"/>
    <property type="gene ID" value="TraesKARUn01G0144480"/>
</dbReference>
<dbReference type="EnsemblPlants" id="TraesKARUn01G0144710.1">
    <property type="protein sequence ID" value="cds.TraesKARUn01G0144710.1"/>
    <property type="gene ID" value="TraesKARUn01G0144710"/>
</dbReference>
<dbReference type="EnsemblPlants" id="TraesKARUn01G0144970.1">
    <property type="protein sequence ID" value="cds.TraesKARUn01G0144970.1"/>
    <property type="gene ID" value="TraesKARUn01G0144970"/>
</dbReference>
<dbReference type="EnsemblPlants" id="TraesKARUn01G0145470.1">
    <property type="protein sequence ID" value="cds.TraesKARUn01G0145470.1"/>
    <property type="gene ID" value="TraesKARUn01G0145470"/>
</dbReference>
<dbReference type="EnsemblPlants" id="TraesKARUn01G0145660.1">
    <property type="protein sequence ID" value="cds.TraesKARUn01G0145660.1"/>
    <property type="gene ID" value="TraesKARUn01G0145660"/>
</dbReference>
<dbReference type="EnsemblPlants" id="TraesKARUn01G0145870.1">
    <property type="protein sequence ID" value="cds.TraesKARUn01G0145870.1"/>
    <property type="gene ID" value="TraesKARUn01G0145870"/>
</dbReference>
<dbReference type="EnsemblPlants" id="TraesKARUn01G0146040.1">
    <property type="protein sequence ID" value="cds.TraesKARUn01G0146040.1"/>
    <property type="gene ID" value="TraesKARUn01G0146040"/>
</dbReference>
<dbReference type="EnsemblPlants" id="TraesKARUn01G0146360.1">
    <property type="protein sequence ID" value="cds.TraesKARUn01G0146360.1"/>
    <property type="gene ID" value="TraesKARUn01G0146360"/>
</dbReference>
<dbReference type="EnsemblPlants" id="TraesKARUn01G0147160.1">
    <property type="protein sequence ID" value="cds.TraesKARUn01G0147160.1"/>
    <property type="gene ID" value="TraesKARUn01G0147160"/>
</dbReference>
<dbReference type="EnsemblPlants" id="TraesKARUn01G0147350.1">
    <property type="protein sequence ID" value="cds.TraesKARUn01G0147350.1"/>
    <property type="gene ID" value="TraesKARUn01G0147350"/>
</dbReference>
<dbReference type="EnsemblPlants" id="TraesKARUn01G0147720.1">
    <property type="protein sequence ID" value="cds.TraesKARUn01G0147720.1"/>
    <property type="gene ID" value="TraesKARUn01G0147720"/>
</dbReference>
<dbReference type="EnsemblPlants" id="TraesKARUn01G0148060.1">
    <property type="protein sequence ID" value="cds.TraesKARUn01G0148060.1"/>
    <property type="gene ID" value="TraesKARUn01G0148060"/>
</dbReference>
<dbReference type="EnsemblPlants" id="TraesKARUn01G0148190.1">
    <property type="protein sequence ID" value="cds.TraesKARUn01G0148190.1"/>
    <property type="gene ID" value="TraesKARUn01G0148190"/>
</dbReference>
<dbReference type="EnsemblPlants" id="TraesKARUn01G0148270.1">
    <property type="protein sequence ID" value="cds.TraesKARUn01G0148270.1"/>
    <property type="gene ID" value="TraesKARUn01G0148270"/>
</dbReference>
<dbReference type="EnsemblPlants" id="TraesKARUn01G0148370.1">
    <property type="protein sequence ID" value="cds.TraesKARUn01G0148370.1"/>
    <property type="gene ID" value="TraesKARUn01G0148370"/>
</dbReference>
<dbReference type="EnsemblPlants" id="TraesKARUn01G0148620.1">
    <property type="protein sequence ID" value="cds.TraesKARUn01G0148620.1"/>
    <property type="gene ID" value="TraesKARUn01G0148620"/>
</dbReference>
<dbReference type="EnsemblPlants" id="TraesKARUn01G0148970.1">
    <property type="protein sequence ID" value="cds.TraesKARUn01G0148970.1"/>
    <property type="gene ID" value="TraesKARUn01G0148970"/>
</dbReference>
<dbReference type="EnsemblPlants" id="TraesKARUn01G0149260.1">
    <property type="protein sequence ID" value="cds.TraesKARUn01G0149260.1"/>
    <property type="gene ID" value="TraesKARUn01G0149260"/>
</dbReference>
<dbReference type="EnsemblPlants" id="TraesKARUn01G0149510.1">
    <property type="protein sequence ID" value="cds.TraesKARUn01G0149510.1"/>
    <property type="gene ID" value="TraesKARUn01G0149510"/>
</dbReference>
<dbReference type="EnsemblPlants" id="TraesKARUn01G0149700.1">
    <property type="protein sequence ID" value="cds.TraesKARUn01G0149700.1"/>
    <property type="gene ID" value="TraesKARUn01G0149700"/>
</dbReference>
<dbReference type="EnsemblPlants" id="TraesKARUn01G0150580.1">
    <property type="protein sequence ID" value="cds.TraesKARUn01G0150580.1"/>
    <property type="gene ID" value="TraesKARUn01G0150580"/>
</dbReference>
<dbReference type="EnsemblPlants" id="TraesKARUn01G0151020.1">
    <property type="protein sequence ID" value="cds.TraesKARUn01G0151020.1"/>
    <property type="gene ID" value="TraesKARUn01G0151020"/>
</dbReference>
<dbReference type="EnsemblPlants" id="TraesKARUn01G0151130.1">
    <property type="protein sequence ID" value="cds.TraesKARUn01G0151130.1"/>
    <property type="gene ID" value="TraesKARUn01G0151130"/>
</dbReference>
<dbReference type="EnsemblPlants" id="TraesKARUn01G0151680.1">
    <property type="protein sequence ID" value="cds.TraesKARUn01G0151680.1"/>
    <property type="gene ID" value="TraesKARUn01G0151680"/>
</dbReference>
<dbReference type="EnsemblPlants" id="TraesKARUn01G0152460.1">
    <property type="protein sequence ID" value="cds.TraesKARUn01G0152460.1"/>
    <property type="gene ID" value="TraesKARUn01G0152460"/>
</dbReference>
<dbReference type="EnsemblPlants" id="TraesKARUn01G0152670.1">
    <property type="protein sequence ID" value="cds.TraesKARUn01G0152670.1"/>
    <property type="gene ID" value="TraesKARUn01G0152670"/>
</dbReference>
<dbReference type="EnsemblPlants" id="TraesKARUn01G0152970.1">
    <property type="protein sequence ID" value="cds.TraesKARUn01G0152970.1"/>
    <property type="gene ID" value="TraesKARUn01G0152970"/>
</dbReference>
<dbReference type="EnsemblPlants" id="TraesKARUn01G0153090.1">
    <property type="protein sequence ID" value="cds.TraesKARUn01G0153090.1"/>
    <property type="gene ID" value="TraesKARUn01G0153090"/>
</dbReference>
<dbReference type="EnsemblPlants" id="TraesKARUn01G0153180.1">
    <property type="protein sequence ID" value="cds.TraesKARUn01G0153180.1"/>
    <property type="gene ID" value="TraesKARUn01G0153180"/>
</dbReference>
<dbReference type="EnsemblPlants" id="TraesKARUn01G0153610.1">
    <property type="protein sequence ID" value="cds.TraesKARUn01G0153610.1"/>
    <property type="gene ID" value="TraesKARUn01G0153610"/>
</dbReference>
<dbReference type="EnsemblPlants" id="TraesKARUn01G0154310.1">
    <property type="protein sequence ID" value="cds.TraesKARUn01G0154310.1"/>
    <property type="gene ID" value="TraesKARUn01G0154310"/>
</dbReference>
<dbReference type="EnsemblPlants" id="TraesKARUn01G0154380.1">
    <property type="protein sequence ID" value="cds.TraesKARUn01G0154380.1"/>
    <property type="gene ID" value="TraesKARUn01G0154380"/>
</dbReference>
<dbReference type="EnsemblPlants" id="TraesKARUn01G0155250.1">
    <property type="protein sequence ID" value="cds.TraesKARUn01G0155250.1"/>
    <property type="gene ID" value="TraesKARUn01G0155250"/>
</dbReference>
<dbReference type="EnsemblPlants" id="TraesKARUn01G0155310.1">
    <property type="protein sequence ID" value="cds.TraesKARUn01G0155310.1"/>
    <property type="gene ID" value="TraesKARUn01G0155310"/>
</dbReference>
<dbReference type="EnsemblPlants" id="TraesKARUn01G0155480.1">
    <property type="protein sequence ID" value="cds.TraesKARUn01G0155480.1"/>
    <property type="gene ID" value="TraesKARUn01G0155480"/>
</dbReference>
<dbReference type="EnsemblPlants" id="TraesKARUn01G0156400.1">
    <property type="protein sequence ID" value="cds.TraesKARUn01G0156400.1"/>
    <property type="gene ID" value="TraesKARUn01G0156400"/>
</dbReference>
<dbReference type="EnsemblPlants" id="TraesKARUn01G0156520.1">
    <property type="protein sequence ID" value="cds.TraesKARUn01G0156520.1"/>
    <property type="gene ID" value="TraesKARUn01G0156520"/>
</dbReference>
<dbReference type="EnsemblPlants" id="TraesKARUn01G0156910.1">
    <property type="protein sequence ID" value="cds.TraesKARUn01G0156910.1"/>
    <property type="gene ID" value="TraesKARUn01G0156910"/>
</dbReference>
<dbReference type="EnsemblPlants" id="TraesKARUn01G0157100.1">
    <property type="protein sequence ID" value="cds.TraesKARUn01G0157100.1"/>
    <property type="gene ID" value="TraesKARUn01G0157100"/>
</dbReference>
<dbReference type="EnsemblPlants" id="TraesKARUn01G0157170.1">
    <property type="protein sequence ID" value="cds.TraesKARUn01G0157170.1"/>
    <property type="gene ID" value="TraesKARUn01G0157170"/>
</dbReference>
<dbReference type="EnsemblPlants" id="TraesKARUn01G0157290.1">
    <property type="protein sequence ID" value="cds.TraesKARUn01G0157290.1"/>
    <property type="gene ID" value="TraesKARUn01G0157290"/>
</dbReference>
<dbReference type="EnsemblPlants" id="TraesKARUn01G0157990.1">
    <property type="protein sequence ID" value="cds.TraesKARUn01G0157990.1"/>
    <property type="gene ID" value="TraesKARUn01G0157990"/>
</dbReference>
<dbReference type="EnsemblPlants" id="TraesKARUn01G0158880.1">
    <property type="protein sequence ID" value="cds.TraesKARUn01G0158880.1"/>
    <property type="gene ID" value="TraesKARUn01G0158880"/>
</dbReference>
<dbReference type="EnsemblPlants" id="TraesKARUn01G0159050.1">
    <property type="protein sequence ID" value="cds.TraesKARUn01G0159050.1"/>
    <property type="gene ID" value="TraesKARUn01G0159050"/>
</dbReference>
<dbReference type="EnsemblPlants" id="TraesKARUn01G0160190.1">
    <property type="protein sequence ID" value="cds.TraesKARUn01G0160190.1"/>
    <property type="gene ID" value="TraesKARUn01G0160190"/>
</dbReference>
<dbReference type="EnsemblPlants" id="TraesKARUn01G0160480.1">
    <property type="protein sequence ID" value="cds.TraesKARUn01G0160480.1"/>
    <property type="gene ID" value="TraesKARUn01G0160480"/>
</dbReference>
<dbReference type="EnsemblPlants" id="TraesKARUn01G0162100.1">
    <property type="protein sequence ID" value="cds.TraesKARUn01G0162100.1"/>
    <property type="gene ID" value="TraesKARUn01G0162100"/>
</dbReference>
<dbReference type="EnsemblPlants" id="TraesKARUn01G0162190.1">
    <property type="protein sequence ID" value="cds.TraesKARUn01G0162190.1"/>
    <property type="gene ID" value="TraesKARUn01G0162190"/>
</dbReference>
<dbReference type="EnsemblPlants" id="TraesKARUn01G0162530.1">
    <property type="protein sequence ID" value="cds.TraesKARUn01G0162530.1"/>
    <property type="gene ID" value="TraesKARUn01G0162530"/>
</dbReference>
<dbReference type="EnsemblPlants" id="TraesKARUn01G0162710.1">
    <property type="protein sequence ID" value="cds.TraesKARUn01G0162710.1"/>
    <property type="gene ID" value="TraesKARUn01G0162710"/>
</dbReference>
<dbReference type="EnsemblPlants" id="TraesKARUn01G0163090.1">
    <property type="protein sequence ID" value="cds.TraesKARUn01G0163090.1"/>
    <property type="gene ID" value="TraesKARUn01G0163090"/>
</dbReference>
<dbReference type="EnsemblPlants" id="TraesKARUn01G0163350.1">
    <property type="protein sequence ID" value="cds.TraesKARUn01G0163350.1"/>
    <property type="gene ID" value="TraesKARUn01G0163350"/>
</dbReference>
<dbReference type="EnsemblPlants" id="TraesKARUn01G0164070.1">
    <property type="protein sequence ID" value="cds.TraesKARUn01G0164070.1"/>
    <property type="gene ID" value="TraesKARUn01G0164070"/>
</dbReference>
<dbReference type="EnsemblPlants" id="TraesKARUn01G0164250.1">
    <property type="protein sequence ID" value="cds.TraesKARUn01G0164250.1"/>
    <property type="gene ID" value="TraesKARUn01G0164250"/>
</dbReference>
<dbReference type="EnsemblPlants" id="TraesKARUn01G0165680.1">
    <property type="protein sequence ID" value="cds.TraesKARUn01G0165680.1"/>
    <property type="gene ID" value="TraesKARUn01G0165680"/>
</dbReference>
<dbReference type="EnsemblPlants" id="TraesKARUn01G0165740.1">
    <property type="protein sequence ID" value="cds.TraesKARUn01G0165740.1"/>
    <property type="gene ID" value="TraesKARUn01G0165740"/>
</dbReference>
<dbReference type="EnsemblPlants" id="TraesKARUn01G0166220.1">
    <property type="protein sequence ID" value="cds.TraesKARUn01G0166220.1"/>
    <property type="gene ID" value="TraesKARUn01G0166220"/>
</dbReference>
<dbReference type="EnsemblPlants" id="TraesKARUn01G0166380.1">
    <property type="protein sequence ID" value="cds.TraesKARUn01G0166380.1"/>
    <property type="gene ID" value="TraesKARUn01G0166380"/>
</dbReference>
<dbReference type="EnsemblPlants" id="TraesKARUn01G0166460.1">
    <property type="protein sequence ID" value="cds.TraesKARUn01G0166460.1"/>
    <property type="gene ID" value="TraesKARUn01G0166460"/>
</dbReference>
<dbReference type="EnsemblPlants" id="TraesKARUn01G0166520.1">
    <property type="protein sequence ID" value="cds.TraesKARUn01G0166520.1"/>
    <property type="gene ID" value="TraesKARUn01G0166520"/>
</dbReference>
<dbReference type="EnsemblPlants" id="TraesKARUn01G0166780.1">
    <property type="protein sequence ID" value="cds.TraesKARUn01G0166780.1"/>
    <property type="gene ID" value="TraesKARUn01G0166780"/>
</dbReference>
<dbReference type="EnsemblPlants" id="TraesKARUn01G0168050.1">
    <property type="protein sequence ID" value="cds.TraesKARUn01G0168050.1"/>
    <property type="gene ID" value="TraesKARUn01G0168050"/>
</dbReference>
<dbReference type="EnsemblPlants" id="TraesKARUn01G0168200.1">
    <property type="protein sequence ID" value="cds.TraesKARUn01G0168200.1"/>
    <property type="gene ID" value="TraesKARUn01G0168200"/>
</dbReference>
<dbReference type="EnsemblPlants" id="TraesKARUn01G0168370.1">
    <property type="protein sequence ID" value="cds.TraesKARUn01G0168370.1"/>
    <property type="gene ID" value="TraesKARUn01G0168370"/>
</dbReference>
<dbReference type="EnsemblPlants" id="TraesKARUn01G0168410.1">
    <property type="protein sequence ID" value="cds.TraesKARUn01G0168410.1"/>
    <property type="gene ID" value="TraesKARUn01G0168410"/>
</dbReference>
<dbReference type="EnsemblPlants" id="TraesKARUn01G0168500.1">
    <property type="protein sequence ID" value="cds.TraesKARUn01G0168500.1"/>
    <property type="gene ID" value="TraesKARUn01G0168500"/>
</dbReference>
<dbReference type="EnsemblPlants" id="TraesKARUn01G0169180.1">
    <property type="protein sequence ID" value="cds.TraesKARUn01G0169180.1"/>
    <property type="gene ID" value="TraesKARUn01G0169180"/>
</dbReference>
<dbReference type="EnsemblPlants" id="TraesKARUn01G0169510.1">
    <property type="protein sequence ID" value="cds.TraesKARUn01G0169510.1"/>
    <property type="gene ID" value="TraesKARUn01G0169510"/>
</dbReference>
<dbReference type="EnsemblPlants" id="TraesKARUn01G0170000.1">
    <property type="protein sequence ID" value="cds.TraesKARUn01G0170000.1"/>
    <property type="gene ID" value="TraesKARUn01G0170000"/>
</dbReference>
<dbReference type="EnsemblPlants" id="TraesKARUn01G0170040.1">
    <property type="protein sequence ID" value="cds.TraesKARUn01G0170040.1"/>
    <property type="gene ID" value="TraesKARUn01G0170040"/>
</dbReference>
<dbReference type="EnsemblPlants" id="TraesKARUn01G0172700.1">
    <property type="protein sequence ID" value="cds.TraesKARUn01G0172700.1"/>
    <property type="gene ID" value="TraesKARUn01G0172700"/>
</dbReference>
<dbReference type="EnsemblPlants" id="TraesKARUn01G0172820.1">
    <property type="protein sequence ID" value="cds.TraesKARUn01G0172820.1"/>
    <property type="gene ID" value="TraesKARUn01G0172820"/>
</dbReference>
<dbReference type="EnsemblPlants" id="TraesKARUn01G0173090.1">
    <property type="protein sequence ID" value="cds.TraesKARUn01G0173090.1"/>
    <property type="gene ID" value="TraesKARUn01G0173090"/>
</dbReference>
<dbReference type="EnsemblPlants" id="TraesKARUn01G0174220.1">
    <property type="protein sequence ID" value="cds.TraesKARUn01G0174220.1"/>
    <property type="gene ID" value="TraesKARUn01G0174220"/>
</dbReference>
<dbReference type="EnsemblPlants" id="TraesKARUn01G0174380.1">
    <property type="protein sequence ID" value="cds.TraesKARUn01G0174380.1"/>
    <property type="gene ID" value="TraesKARUn01G0174380"/>
</dbReference>
<dbReference type="EnsemblPlants" id="TraesKARUn01G0178260.1">
    <property type="protein sequence ID" value="cds.TraesKARUn01G0178260.1"/>
    <property type="gene ID" value="TraesKARUn01G0178260"/>
</dbReference>
<dbReference type="EnsemblPlants" id="TraesKARUn01G0179070.1">
    <property type="protein sequence ID" value="cds.TraesKARUn01G0179070.1"/>
    <property type="gene ID" value="TraesKARUn01G0179070"/>
</dbReference>
<dbReference type="EnsemblPlants" id="TraesKARUn01G0179450.1">
    <property type="protein sequence ID" value="cds.TraesKARUn01G0179450.1"/>
    <property type="gene ID" value="TraesKARUn01G0179450"/>
</dbReference>
<dbReference type="EnsemblPlants" id="TraesKARUn01G0181740.1">
    <property type="protein sequence ID" value="cds.TraesKARUn01G0181740.1"/>
    <property type="gene ID" value="TraesKARUn01G0181740"/>
</dbReference>
<dbReference type="EnsemblPlants" id="TraesKARUn01G0185540.1">
    <property type="protein sequence ID" value="cds.TraesKARUn01G0185540.1"/>
    <property type="gene ID" value="TraesKARUn01G0185540"/>
</dbReference>
<dbReference type="EnsemblPlants" id="TraesKARUn01G0186560.1">
    <property type="protein sequence ID" value="cds.TraesKARUn01G0186560.1"/>
    <property type="gene ID" value="TraesKARUn01G0186560"/>
</dbReference>
<dbReference type="EnsemblPlants" id="TraesKARUn01G0188320.1">
    <property type="protein sequence ID" value="cds.TraesKARUn01G0188320.1"/>
    <property type="gene ID" value="TraesKARUn01G0188320"/>
</dbReference>
<dbReference type="EnsemblPlants" id="TraesKARUn01G0189000.1">
    <property type="protein sequence ID" value="cds.TraesKARUn01G0189000.1"/>
    <property type="gene ID" value="TraesKARUn01G0189000"/>
</dbReference>
<dbReference type="EnsemblPlants" id="TraesKARUn01G0193820.1">
    <property type="protein sequence ID" value="cds.TraesKARUn01G0193820.1"/>
    <property type="gene ID" value="TraesKARUn01G0193820"/>
</dbReference>
<dbReference type="EnsemblPlants" id="TraesKARUn01G0194920.1">
    <property type="protein sequence ID" value="cds.TraesKARUn01G0194920.1"/>
    <property type="gene ID" value="TraesKARUn01G0194920"/>
</dbReference>
<dbReference type="EnsemblPlants" id="TraesPARA_EIv1.0_2014540.1">
    <property type="protein sequence ID" value="TraesPARA_EIv1.0_2014540.1.CDS1"/>
    <property type="gene ID" value="TraesPARA_EIv1.0_2014540"/>
</dbReference>
<dbReference type="EnsemblPlants" id="TraesPARA_EIv1.0_2643640.1">
    <property type="protein sequence ID" value="TraesPARA_EIv1.0_2643640.1.CDS1"/>
    <property type="gene ID" value="TraesPARA_EIv1.0_2643640"/>
</dbReference>
<dbReference type="EnsemblPlants" id="TraesPARA_EIv1.0_2643880.1">
    <property type="protein sequence ID" value="TraesPARA_EIv1.0_2643880.1.CDS1"/>
    <property type="gene ID" value="TraesPARA_EIv1.0_2643880"/>
</dbReference>
<dbReference type="EnsemblPlants" id="TraesPARA_EIv1.0_2644600.1">
    <property type="protein sequence ID" value="TraesPARA_EIv1.0_2644600.1.CDS1"/>
    <property type="gene ID" value="TraesPARA_EIv1.0_2644600"/>
</dbReference>
<dbReference type="EnsemblPlants" id="TraesPARA_EIv1.0_2645010.1">
    <property type="protein sequence ID" value="TraesPARA_EIv1.0_2645010.1.CDS1"/>
    <property type="gene ID" value="TraesPARA_EIv1.0_2645010"/>
</dbReference>
<dbReference type="EnsemblPlants" id="TraesPARA_EIv1.0_2645590.1">
    <property type="protein sequence ID" value="TraesPARA_EIv1.0_2645590.1.CDS1"/>
    <property type="gene ID" value="TraesPARA_EIv1.0_2645590"/>
</dbReference>
<dbReference type="EnsemblPlants" id="TraesPARA_EIv1.0_2646230.1">
    <property type="protein sequence ID" value="TraesPARA_EIv1.0_2646230.1.CDS1"/>
    <property type="gene ID" value="TraesPARA_EIv1.0_2646230"/>
</dbReference>
<dbReference type="EnsemblPlants" id="TraesPARA_EIv1.0_2646890.1">
    <property type="protein sequence ID" value="TraesPARA_EIv1.0_2646890.1.CDS1"/>
    <property type="gene ID" value="TraesPARA_EIv1.0_2646890"/>
</dbReference>
<dbReference type="EnsemblPlants" id="TraesPARA_EIv1.0_2647410.1">
    <property type="protein sequence ID" value="TraesPARA_EIv1.0_2647410.1.CDS1"/>
    <property type="gene ID" value="TraesPARA_EIv1.0_2647410"/>
</dbReference>
<dbReference type="EnsemblPlants" id="TraesPARA_EIv1.0_2648050.1">
    <property type="protein sequence ID" value="TraesPARA_EIv1.0_2648050.1.CDS1"/>
    <property type="gene ID" value="TraesPARA_EIv1.0_2648050"/>
</dbReference>
<dbReference type="EnsemblPlants" id="TraesPARA_EIv1.0_2648210.1">
    <property type="protein sequence ID" value="TraesPARA_EIv1.0_2648210.1.CDS1"/>
    <property type="gene ID" value="TraesPARA_EIv1.0_2648210"/>
</dbReference>
<dbReference type="EnsemblPlants" id="TraesPARA_EIv1.0_2649090.1">
    <property type="protein sequence ID" value="TraesPARA_EIv1.0_2649090.1.CDS1"/>
    <property type="gene ID" value="TraesPARA_EIv1.0_2649090"/>
</dbReference>
<dbReference type="EnsemblPlants" id="TraesPARA_EIv1.0_2649370.1">
    <property type="protein sequence ID" value="TraesPARA_EIv1.0_2649370.1.CDS1"/>
    <property type="gene ID" value="TraesPARA_EIv1.0_2649370"/>
</dbReference>
<dbReference type="EnsemblPlants" id="TraesPARA_EIv1.0_2649490.1">
    <property type="protein sequence ID" value="TraesPARA_EIv1.0_2649490.1.CDS1"/>
    <property type="gene ID" value="TraesPARA_EIv1.0_2649490"/>
</dbReference>
<dbReference type="EnsemblPlants" id="TraesPARA_EIv1.0_2649630.1">
    <property type="protein sequence ID" value="TraesPARA_EIv1.0_2649630.1.CDS1"/>
    <property type="gene ID" value="TraesPARA_EIv1.0_2649630"/>
</dbReference>
<dbReference type="EnsemblPlants" id="TraesPARA_EIv1.0_2650080.1">
    <property type="protein sequence ID" value="TraesPARA_EIv1.0_2650080.1.CDS1"/>
    <property type="gene ID" value="TraesPARA_EIv1.0_2650080"/>
</dbReference>
<dbReference type="EnsemblPlants" id="TraesPARA_EIv1.0_2650430.1">
    <property type="protein sequence ID" value="TraesPARA_EIv1.0_2650430.1.CDS1"/>
    <property type="gene ID" value="TraesPARA_EIv1.0_2650430"/>
</dbReference>
<dbReference type="EnsemblPlants" id="TraesPARA_EIv1.0_2651070.1">
    <property type="protein sequence ID" value="TraesPARA_EIv1.0_2651070.1.CDS1"/>
    <property type="gene ID" value="TraesPARA_EIv1.0_2651070"/>
</dbReference>
<dbReference type="EnsemblPlants" id="TraesPARA_EIv1.0_2652310.1">
    <property type="protein sequence ID" value="TraesPARA_EIv1.0_2652310.1.CDS1"/>
    <property type="gene ID" value="TraesPARA_EIv1.0_2652310"/>
</dbReference>
<dbReference type="EnsemblPlants" id="TraesPARA_EIv1.0_2652590.1">
    <property type="protein sequence ID" value="TraesPARA_EIv1.0_2652590.1.CDS1"/>
    <property type="gene ID" value="TraesPARA_EIv1.0_2652590"/>
</dbReference>
<dbReference type="EnsemblPlants" id="TraesPARA_EIv1.0_2652700.1">
    <property type="protein sequence ID" value="TraesPARA_EIv1.0_2652700.1.CDS1"/>
    <property type="gene ID" value="TraesPARA_EIv1.0_2652700"/>
</dbReference>
<dbReference type="EnsemblPlants" id="TraesPARA_EIv1.0_2652880.1">
    <property type="protein sequence ID" value="TraesPARA_EIv1.0_2652880.1.CDS1"/>
    <property type="gene ID" value="TraesPARA_EIv1.0_2652880"/>
</dbReference>
<dbReference type="EnsemblPlants" id="TraesPARA_EIv1.0_2653000.1">
    <property type="protein sequence ID" value="TraesPARA_EIv1.0_2653000.1.CDS1"/>
    <property type="gene ID" value="TraesPARA_EIv1.0_2653000"/>
</dbReference>
<dbReference type="EnsemblPlants" id="TraesPARA_EIv1.0_2653380.1">
    <property type="protein sequence ID" value="TraesPARA_EIv1.0_2653380.1.CDS1"/>
    <property type="gene ID" value="TraesPARA_EIv1.0_2653380"/>
</dbReference>
<dbReference type="EnsemblPlants" id="TraesPARA_EIv1.0_2653880.1">
    <property type="protein sequence ID" value="TraesPARA_EIv1.0_2653880.1.CDS1"/>
    <property type="gene ID" value="TraesPARA_EIv1.0_2653880"/>
</dbReference>
<dbReference type="EnsemblPlants" id="TraesPARA_EIv1.0_2655260.1">
    <property type="protein sequence ID" value="TraesPARA_EIv1.0_2655260.1.CDS1"/>
    <property type="gene ID" value="TraesPARA_EIv1.0_2655260"/>
</dbReference>
<dbReference type="EnsemblPlants" id="TraesPARA_EIv1.0_2655620.1">
    <property type="protein sequence ID" value="TraesPARA_EIv1.0_2655620.1.CDS1"/>
    <property type="gene ID" value="TraesPARA_EIv1.0_2655620"/>
</dbReference>
<dbReference type="EnsemblPlants" id="TraesPARA_EIv1.0_2655720.1">
    <property type="protein sequence ID" value="TraesPARA_EIv1.0_2655720.1.CDS1"/>
    <property type="gene ID" value="TraesPARA_EIv1.0_2655720"/>
</dbReference>
<dbReference type="EnsemblPlants" id="TraesPARA_EIv1.0_2655830.1">
    <property type="protein sequence ID" value="TraesPARA_EIv1.0_2655830.1.CDS1"/>
    <property type="gene ID" value="TraesPARA_EIv1.0_2655830"/>
</dbReference>
<dbReference type="EnsemblPlants" id="TraesPARA_EIv1.0_2656100.1">
    <property type="protein sequence ID" value="TraesPARA_EIv1.0_2656100.1.CDS1"/>
    <property type="gene ID" value="TraesPARA_EIv1.0_2656100"/>
</dbReference>
<dbReference type="EnsemblPlants" id="TraesPARA_EIv1.0_2656420.1">
    <property type="protein sequence ID" value="TraesPARA_EIv1.0_2656420.1.CDS1"/>
    <property type="gene ID" value="TraesPARA_EIv1.0_2656420"/>
</dbReference>
<dbReference type="EnsemblPlants" id="TraesPARA_EIv1.0_2657140.1">
    <property type="protein sequence ID" value="TraesPARA_EIv1.0_2657140.1.CDS1"/>
    <property type="gene ID" value="TraesPARA_EIv1.0_2657140"/>
</dbReference>
<dbReference type="EnsemblPlants" id="TraesPARA_EIv1.0_2658360.1">
    <property type="protein sequence ID" value="TraesPARA_EIv1.0_2658360.1.CDS1"/>
    <property type="gene ID" value="TraesPARA_EIv1.0_2658360"/>
</dbReference>
<dbReference type="EnsemblPlants" id="TraesPARA_EIv1.0_2658500.1">
    <property type="protein sequence ID" value="TraesPARA_EIv1.0_2658500.1.CDS1"/>
    <property type="gene ID" value="TraesPARA_EIv1.0_2658500"/>
</dbReference>
<dbReference type="EnsemblPlants" id="TraesPARA_EIv1.0_2660000.1">
    <property type="protein sequence ID" value="TraesPARA_EIv1.0_2660000.1.CDS1"/>
    <property type="gene ID" value="TraesPARA_EIv1.0_2660000"/>
</dbReference>
<dbReference type="EnsemblPlants" id="TraesPARA_EIv1.0_2660320.1">
    <property type="protein sequence ID" value="TraesPARA_EIv1.0_2660320.1.CDS1"/>
    <property type="gene ID" value="TraesPARA_EIv1.0_2660320"/>
</dbReference>
<dbReference type="EnsemblPlants" id="TraesPARA_EIv1.0_2663430.1">
    <property type="protein sequence ID" value="TraesPARA_EIv1.0_2663430.1.CDS1"/>
    <property type="gene ID" value="TraesPARA_EIv1.0_2663430"/>
</dbReference>
<dbReference type="EnsemblPlants" id="TraesPARA_EIv1.0_2663530.1">
    <property type="protein sequence ID" value="TraesPARA_EIv1.0_2663530.1.CDS1"/>
    <property type="gene ID" value="TraesPARA_EIv1.0_2663530"/>
</dbReference>
<dbReference type="EnsemblPlants" id="TraesPARA_EIv1.0_2663700.1">
    <property type="protein sequence ID" value="TraesPARA_EIv1.0_2663700.1.CDS1"/>
    <property type="gene ID" value="TraesPARA_EIv1.0_2663700"/>
</dbReference>
<dbReference type="EnsemblPlants" id="TraesPARA_EIv1.0_2665750.1">
    <property type="protein sequence ID" value="TraesPARA_EIv1.0_2665750.1.CDS1"/>
    <property type="gene ID" value="TraesPARA_EIv1.0_2665750"/>
</dbReference>
<dbReference type="EnsemblPlants" id="TraesPARA_EIv1.0_2666230.1">
    <property type="protein sequence ID" value="TraesPARA_EIv1.0_2666230.1.CDS1"/>
    <property type="gene ID" value="TraesPARA_EIv1.0_2666230"/>
</dbReference>
<dbReference type="EnsemblPlants" id="TraesPARA_EIv1.0_2666490.1">
    <property type="protein sequence ID" value="TraesPARA_EIv1.0_2666490.1.CDS1"/>
    <property type="gene ID" value="TraesPARA_EIv1.0_2666490"/>
</dbReference>
<dbReference type="EnsemblPlants" id="TraesPARA_EIv1.0_2666750.1">
    <property type="protein sequence ID" value="TraesPARA_EIv1.0_2666750.1.CDS1"/>
    <property type="gene ID" value="TraesPARA_EIv1.0_2666750"/>
</dbReference>
<dbReference type="EnsemblPlants" id="TraesPARA_EIv1.0_2667070.1">
    <property type="protein sequence ID" value="TraesPARA_EIv1.0_2667070.1.CDS1"/>
    <property type="gene ID" value="TraesPARA_EIv1.0_2667070"/>
</dbReference>
<dbReference type="EnsemblPlants" id="TraesPARA_EIv1.0_2668300.1">
    <property type="protein sequence ID" value="TraesPARA_EIv1.0_2668300.1.CDS1"/>
    <property type="gene ID" value="TraesPARA_EIv1.0_2668300"/>
</dbReference>
<dbReference type="EnsemblPlants" id="TraesPARA_EIv1.0_2669530.1">
    <property type="protein sequence ID" value="TraesPARA_EIv1.0_2669530.1.CDS1"/>
    <property type="gene ID" value="TraesPARA_EIv1.0_2669530"/>
</dbReference>
<dbReference type="EnsemblPlants" id="TraesPARA_EIv1.0_2670100.1">
    <property type="protein sequence ID" value="TraesPARA_EIv1.0_2670100.1.CDS1"/>
    <property type="gene ID" value="TraesPARA_EIv1.0_2670100"/>
</dbReference>
<dbReference type="EnsemblPlants" id="TraesPARA_EIv1.0_2672180.1">
    <property type="protein sequence ID" value="TraesPARA_EIv1.0_2672180.1.CDS1"/>
    <property type="gene ID" value="TraesPARA_EIv1.0_2672180"/>
</dbReference>
<dbReference type="EnsemblPlants" id="TraesPARA_EIv1.0_2672480.1">
    <property type="protein sequence ID" value="TraesPARA_EIv1.0_2672480.1.CDS1"/>
    <property type="gene ID" value="TraesPARA_EIv1.0_2672480"/>
</dbReference>
<dbReference type="EnsemblPlants" id="TraesPARA_EIv1.0_2673210.1">
    <property type="protein sequence ID" value="TraesPARA_EIv1.0_2673210.1.CDS1"/>
    <property type="gene ID" value="TraesPARA_EIv1.0_2673210"/>
</dbReference>
<dbReference type="EnsemblPlants" id="TraesPARA_EIv1.0_2673580.1">
    <property type="protein sequence ID" value="TraesPARA_EIv1.0_2673580.1.CDS1"/>
    <property type="gene ID" value="TraesPARA_EIv1.0_2673580"/>
</dbReference>
<dbReference type="EnsemblPlants" id="TraesPARA_EIv1.0_2674140.1">
    <property type="protein sequence ID" value="TraesPARA_EIv1.0_2674140.1.CDS1"/>
    <property type="gene ID" value="TraesPARA_EIv1.0_2674140"/>
</dbReference>
<dbReference type="EnsemblPlants" id="TraesPARA_EIv1.0_2674310.1">
    <property type="protein sequence ID" value="TraesPARA_EIv1.0_2674310.1.CDS1"/>
    <property type="gene ID" value="TraesPARA_EIv1.0_2674310"/>
</dbReference>
<dbReference type="EnsemblPlants" id="TraesPARA_EIv1.0_2675910.1">
    <property type="protein sequence ID" value="TraesPARA_EIv1.0_2675910.1.CDS1"/>
    <property type="gene ID" value="TraesPARA_EIv1.0_2675910"/>
</dbReference>
<dbReference type="EnsemblPlants" id="TraesPARA_EIv1.0_2677490.1">
    <property type="protein sequence ID" value="TraesPARA_EIv1.0_2677490.1.CDS1"/>
    <property type="gene ID" value="TraesPARA_EIv1.0_2677490"/>
</dbReference>
<dbReference type="EnsemblPlants" id="TraesPARA_EIv1.0_2680860.1">
    <property type="protein sequence ID" value="TraesPARA_EIv1.0_2680860.1.CDS1"/>
    <property type="gene ID" value="TraesPARA_EIv1.0_2680860"/>
</dbReference>
<dbReference type="EnsemblPlants" id="TraesPARA_EIv1.0_2681480.1">
    <property type="protein sequence ID" value="TraesPARA_EIv1.0_2681480.1.CDS1"/>
    <property type="gene ID" value="TraesPARA_EIv1.0_2681480"/>
</dbReference>
<dbReference type="EnsemblPlants" id="TraesRN1D0100499400.1">
    <property type="protein sequence ID" value="TraesRN1D0100499400.1"/>
    <property type="gene ID" value="TraesRN1D0100499400"/>
</dbReference>
<dbReference type="EnsemblPlants" id="TraesRN1D0100499600.1">
    <property type="protein sequence ID" value="TraesRN1D0100499600.1"/>
    <property type="gene ID" value="TraesRN1D0100499600"/>
</dbReference>
<dbReference type="GeneID" id="803182"/>
<dbReference type="Gramene" id="TraesKARUn01G0028420.1">
    <property type="protein sequence ID" value="cds.TraesKARUn01G0028420.1"/>
    <property type="gene ID" value="TraesKARUn01G0028420"/>
</dbReference>
<dbReference type="Gramene" id="TraesKARUn01G0029550.1">
    <property type="protein sequence ID" value="cds.TraesKARUn01G0029550.1"/>
    <property type="gene ID" value="TraesKARUn01G0029550"/>
</dbReference>
<dbReference type="Gramene" id="TraesKARUn01G0030020.1">
    <property type="protein sequence ID" value="cds.TraesKARUn01G0030020.1"/>
    <property type="gene ID" value="TraesKARUn01G0030020"/>
</dbReference>
<dbReference type="Gramene" id="TraesKARUn01G0030370.1">
    <property type="protein sequence ID" value="cds.TraesKARUn01G0030370.1"/>
    <property type="gene ID" value="TraesKARUn01G0030370"/>
</dbReference>
<dbReference type="Gramene" id="TraesKARUn01G0030450.1">
    <property type="protein sequence ID" value="cds.TraesKARUn01G0030450.1"/>
    <property type="gene ID" value="TraesKARUn01G0030450"/>
</dbReference>
<dbReference type="Gramene" id="TraesKARUn01G0030620.1">
    <property type="protein sequence ID" value="cds.TraesKARUn01G0030620.1"/>
    <property type="gene ID" value="TraesKARUn01G0030620"/>
</dbReference>
<dbReference type="Gramene" id="TraesKARUn01G0030820.1">
    <property type="protein sequence ID" value="cds.TraesKARUn01G0030820.1"/>
    <property type="gene ID" value="TraesKARUn01G0030820"/>
</dbReference>
<dbReference type="Gramene" id="TraesKARUn01G0032690.1">
    <property type="protein sequence ID" value="cds.TraesKARUn01G0032690.1"/>
    <property type="gene ID" value="TraesKARUn01G0032690"/>
</dbReference>
<dbReference type="Gramene" id="TraesKARUn01G0033540.1">
    <property type="protein sequence ID" value="cds.TraesKARUn01G0033540.1"/>
    <property type="gene ID" value="TraesKARUn01G0033540"/>
</dbReference>
<dbReference type="Gramene" id="TraesKARUn01G0037200.1">
    <property type="protein sequence ID" value="cds.TraesKARUn01G0037200.1"/>
    <property type="gene ID" value="TraesKARUn01G0037200"/>
</dbReference>
<dbReference type="Gramene" id="TraesKARUn01G0061450.1">
    <property type="protein sequence ID" value="cds.TraesKARUn01G0061450.1"/>
    <property type="gene ID" value="TraesKARUn01G0061450"/>
</dbReference>
<dbReference type="Gramene" id="TraesKARUn01G0061900.1">
    <property type="protein sequence ID" value="cds.TraesKARUn01G0061900.1"/>
    <property type="gene ID" value="TraesKARUn01G0061900"/>
</dbReference>
<dbReference type="Gramene" id="TraesKARUn01G0065250.1">
    <property type="protein sequence ID" value="cds.TraesKARUn01G0065250.1"/>
    <property type="gene ID" value="TraesKARUn01G0065250"/>
</dbReference>
<dbReference type="Gramene" id="TraesKARUn01G0066330.1">
    <property type="protein sequence ID" value="cds.TraesKARUn01G0066330.1"/>
    <property type="gene ID" value="TraesKARUn01G0066330"/>
</dbReference>
<dbReference type="Gramene" id="TraesKARUn01G0068080.1">
    <property type="protein sequence ID" value="cds.TraesKARUn01G0068080.1"/>
    <property type="gene ID" value="TraesKARUn01G0068080"/>
</dbReference>
<dbReference type="Gramene" id="TraesKARUn01G0068560.1">
    <property type="protein sequence ID" value="cds.TraesKARUn01G0068560.1"/>
    <property type="gene ID" value="TraesKARUn01G0068560"/>
</dbReference>
<dbReference type="Gramene" id="TraesKARUn01G0069360.1">
    <property type="protein sequence ID" value="cds.TraesKARUn01G0069360.1"/>
    <property type="gene ID" value="TraesKARUn01G0069360"/>
</dbReference>
<dbReference type="Gramene" id="TraesKARUn01G0069490.1">
    <property type="protein sequence ID" value="cds.TraesKARUn01G0069490.1"/>
    <property type="gene ID" value="TraesKARUn01G0069490"/>
</dbReference>
<dbReference type="Gramene" id="TraesKARUn01G0069940.1">
    <property type="protein sequence ID" value="cds.TraesKARUn01G0069940.1"/>
    <property type="gene ID" value="TraesKARUn01G0069940"/>
</dbReference>
<dbReference type="Gramene" id="TraesKARUn01G0070720.1">
    <property type="protein sequence ID" value="cds.TraesKARUn01G0070720.1"/>
    <property type="gene ID" value="TraesKARUn01G0070720"/>
</dbReference>
<dbReference type="Gramene" id="TraesKARUn01G0071590.1">
    <property type="protein sequence ID" value="cds.TraesKARUn01G0071590.1"/>
    <property type="gene ID" value="TraesKARUn01G0071590"/>
</dbReference>
<dbReference type="Gramene" id="TraesKARUn01G0072080.1">
    <property type="protein sequence ID" value="cds.TraesKARUn01G0072080.1"/>
    <property type="gene ID" value="TraesKARUn01G0072080"/>
</dbReference>
<dbReference type="Gramene" id="TraesKARUn01G0072680.1">
    <property type="protein sequence ID" value="cds.TraesKARUn01G0072680.1"/>
    <property type="gene ID" value="TraesKARUn01G0072680"/>
</dbReference>
<dbReference type="Gramene" id="TraesKARUn01G0073260.1">
    <property type="protein sequence ID" value="cds.TraesKARUn01G0073260.1"/>
    <property type="gene ID" value="TraesKARUn01G0073260"/>
</dbReference>
<dbReference type="Gramene" id="TraesKARUn01G0076070.1">
    <property type="protein sequence ID" value="cds.TraesKARUn01G0076070.1"/>
    <property type="gene ID" value="TraesKARUn01G0076070"/>
</dbReference>
<dbReference type="Gramene" id="TraesKARUn01G0077140.1">
    <property type="protein sequence ID" value="cds.TraesKARUn01G0077140.1"/>
    <property type="gene ID" value="TraesKARUn01G0077140"/>
</dbReference>
<dbReference type="Gramene" id="TraesKARUn01G0077630.1">
    <property type="protein sequence ID" value="cds.TraesKARUn01G0077630.1"/>
    <property type="gene ID" value="TraesKARUn01G0077630"/>
</dbReference>
<dbReference type="Gramene" id="TraesKARUn01G0077950.1">
    <property type="protein sequence ID" value="cds.TraesKARUn01G0077950.1"/>
    <property type="gene ID" value="TraesKARUn01G0077950"/>
</dbReference>
<dbReference type="Gramene" id="TraesKARUn01G0078290.1">
    <property type="protein sequence ID" value="cds.TraesKARUn01G0078290.1"/>
    <property type="gene ID" value="TraesKARUn01G0078290"/>
</dbReference>
<dbReference type="Gramene" id="TraesKARUn01G0078900.1">
    <property type="protein sequence ID" value="cds.TraesKARUn01G0078900.1"/>
    <property type="gene ID" value="TraesKARUn01G0078900"/>
</dbReference>
<dbReference type="Gramene" id="TraesKARUn01G0079000.1">
    <property type="protein sequence ID" value="cds.TraesKARUn01G0079000.1"/>
    <property type="gene ID" value="TraesKARUn01G0079000"/>
</dbReference>
<dbReference type="Gramene" id="TraesKARUn01G0079590.1">
    <property type="protein sequence ID" value="cds.TraesKARUn01G0079590.1"/>
    <property type="gene ID" value="TraesKARUn01G0079590"/>
</dbReference>
<dbReference type="Gramene" id="TraesKARUn01G0080090.1">
    <property type="protein sequence ID" value="cds.TraesKARUn01G0080090.1"/>
    <property type="gene ID" value="TraesKARUn01G0080090"/>
</dbReference>
<dbReference type="Gramene" id="TraesKARUn01G0081750.1">
    <property type="protein sequence ID" value="cds.TraesKARUn01G0081750.1"/>
    <property type="gene ID" value="TraesKARUn01G0081750"/>
</dbReference>
<dbReference type="Gramene" id="TraesKARUn01G0081940.1">
    <property type="protein sequence ID" value="cds.TraesKARUn01G0081940.1"/>
    <property type="gene ID" value="TraesKARUn01G0081940"/>
</dbReference>
<dbReference type="Gramene" id="TraesKARUn01G0082060.1">
    <property type="protein sequence ID" value="cds.TraesKARUn01G0082060.1"/>
    <property type="gene ID" value="TraesKARUn01G0082060"/>
</dbReference>
<dbReference type="Gramene" id="TraesKARUn01G0083130.1">
    <property type="protein sequence ID" value="cds.TraesKARUn01G0083130.1"/>
    <property type="gene ID" value="TraesKARUn01G0083130"/>
</dbReference>
<dbReference type="Gramene" id="TraesKARUn01G0083480.1">
    <property type="protein sequence ID" value="cds.TraesKARUn01G0083480.1"/>
    <property type="gene ID" value="TraesKARUn01G0083480"/>
</dbReference>
<dbReference type="Gramene" id="TraesKARUn01G0084360.1">
    <property type="protein sequence ID" value="cds.TraesKARUn01G0084360.1"/>
    <property type="gene ID" value="TraesKARUn01G0084360"/>
</dbReference>
<dbReference type="Gramene" id="TraesKARUn01G0084520.1">
    <property type="protein sequence ID" value="cds.TraesKARUn01G0084520.1"/>
    <property type="gene ID" value="TraesKARUn01G0084520"/>
</dbReference>
<dbReference type="Gramene" id="TraesKARUn01G0086100.1">
    <property type="protein sequence ID" value="cds.TraesKARUn01G0086100.1"/>
    <property type="gene ID" value="TraesKARUn01G0086100"/>
</dbReference>
<dbReference type="Gramene" id="TraesKARUn01G0086950.1">
    <property type="protein sequence ID" value="cds.TraesKARUn01G0086950.1"/>
    <property type="gene ID" value="TraesKARUn01G0086950"/>
</dbReference>
<dbReference type="Gramene" id="TraesKARUn01G0087270.1">
    <property type="protein sequence ID" value="cds.TraesKARUn01G0087270.1"/>
    <property type="gene ID" value="TraesKARUn01G0087270"/>
</dbReference>
<dbReference type="Gramene" id="TraesKARUn01G0087930.1">
    <property type="protein sequence ID" value="cds.TraesKARUn01G0087930.1"/>
    <property type="gene ID" value="TraesKARUn01G0087930"/>
</dbReference>
<dbReference type="Gramene" id="TraesKARUn01G0088240.1">
    <property type="protein sequence ID" value="cds.TraesKARUn01G0088240.1"/>
    <property type="gene ID" value="TraesKARUn01G0088240"/>
</dbReference>
<dbReference type="Gramene" id="TraesKARUn01G0089270.1">
    <property type="protein sequence ID" value="cds.TraesKARUn01G0089270.1"/>
    <property type="gene ID" value="TraesKARUn01G0089270"/>
</dbReference>
<dbReference type="Gramene" id="TraesKARUn01G0089600.1">
    <property type="protein sequence ID" value="cds.TraesKARUn01G0089600.1"/>
    <property type="gene ID" value="TraesKARUn01G0089600"/>
</dbReference>
<dbReference type="Gramene" id="TraesKARUn01G0089850.1">
    <property type="protein sequence ID" value="cds.TraesKARUn01G0089850.1"/>
    <property type="gene ID" value="TraesKARUn01G0089850"/>
</dbReference>
<dbReference type="Gramene" id="TraesKARUn01G0090800.1">
    <property type="protein sequence ID" value="cds.TraesKARUn01G0090800.1"/>
    <property type="gene ID" value="TraesKARUn01G0090800"/>
</dbReference>
<dbReference type="Gramene" id="TraesKARUn01G0090840.1">
    <property type="protein sequence ID" value="cds.TraesKARUn01G0090840.1"/>
    <property type="gene ID" value="TraesKARUn01G0090840"/>
</dbReference>
<dbReference type="Gramene" id="TraesKARUn01G0090990.1">
    <property type="protein sequence ID" value="cds.TraesKARUn01G0090990.1"/>
    <property type="gene ID" value="TraesKARUn01G0090990"/>
</dbReference>
<dbReference type="Gramene" id="TraesKARUn01G0092150.1">
    <property type="protein sequence ID" value="cds.TraesKARUn01G0092150.1"/>
    <property type="gene ID" value="TraesKARUn01G0092150"/>
</dbReference>
<dbReference type="Gramene" id="TraesKARUn01G0092400.1">
    <property type="protein sequence ID" value="cds.TraesKARUn01G0092400.1"/>
    <property type="gene ID" value="TraesKARUn01G0092400"/>
</dbReference>
<dbReference type="Gramene" id="TraesKARUn01G0093520.1">
    <property type="protein sequence ID" value="cds.TraesKARUn01G0093520.1"/>
    <property type="gene ID" value="TraesKARUn01G0093520"/>
</dbReference>
<dbReference type="Gramene" id="TraesKARUn01G0094980.1">
    <property type="protein sequence ID" value="cds.TraesKARUn01G0094980.1"/>
    <property type="gene ID" value="TraesKARUn01G0094980"/>
</dbReference>
<dbReference type="Gramene" id="TraesKARUn01G0095650.1">
    <property type="protein sequence ID" value="cds.TraesKARUn01G0095650.1"/>
    <property type="gene ID" value="TraesKARUn01G0095650"/>
</dbReference>
<dbReference type="Gramene" id="TraesKARUn01G0095840.1">
    <property type="protein sequence ID" value="cds.TraesKARUn01G0095840.1"/>
    <property type="gene ID" value="TraesKARUn01G0095840"/>
</dbReference>
<dbReference type="Gramene" id="TraesKARUn01G0096590.1">
    <property type="protein sequence ID" value="cds.TraesKARUn01G0096590.1"/>
    <property type="gene ID" value="TraesKARUn01G0096590"/>
</dbReference>
<dbReference type="Gramene" id="TraesKARUn01G0096980.1">
    <property type="protein sequence ID" value="cds.TraesKARUn01G0096980.1"/>
    <property type="gene ID" value="TraesKARUn01G0096980"/>
</dbReference>
<dbReference type="Gramene" id="TraesKARUn01G0097000.1">
    <property type="protein sequence ID" value="cds.TraesKARUn01G0097000.1"/>
    <property type="gene ID" value="TraesKARUn01G0097000"/>
</dbReference>
<dbReference type="Gramene" id="TraesKARUn01G0097200.1">
    <property type="protein sequence ID" value="cds.TraesKARUn01G0097200.1"/>
    <property type="gene ID" value="TraesKARUn01G0097200"/>
</dbReference>
<dbReference type="Gramene" id="TraesKARUn01G0097510.1">
    <property type="protein sequence ID" value="cds.TraesKARUn01G0097510.1"/>
    <property type="gene ID" value="TraesKARUn01G0097510"/>
</dbReference>
<dbReference type="Gramene" id="TraesKARUn01G0097690.1">
    <property type="protein sequence ID" value="cds.TraesKARUn01G0097690.1"/>
    <property type="gene ID" value="TraesKARUn01G0097690"/>
</dbReference>
<dbReference type="Gramene" id="TraesKARUn01G0097980.1">
    <property type="protein sequence ID" value="cds.TraesKARUn01G0097980.1"/>
    <property type="gene ID" value="TraesKARUn01G0097980"/>
</dbReference>
<dbReference type="Gramene" id="TraesKARUn01G0098080.1">
    <property type="protein sequence ID" value="cds.TraesKARUn01G0098080.1"/>
    <property type="gene ID" value="TraesKARUn01G0098080"/>
</dbReference>
<dbReference type="Gramene" id="TraesKARUn01G0098640.1">
    <property type="protein sequence ID" value="cds.TraesKARUn01G0098640.1"/>
    <property type="gene ID" value="TraesKARUn01G0098640"/>
</dbReference>
<dbReference type="Gramene" id="TraesKARUn01G0098720.1">
    <property type="protein sequence ID" value="cds.TraesKARUn01G0098720.1"/>
    <property type="gene ID" value="TraesKARUn01G0098720"/>
</dbReference>
<dbReference type="Gramene" id="TraesKARUn01G0100070.1">
    <property type="protein sequence ID" value="cds.TraesKARUn01G0100070.1"/>
    <property type="gene ID" value="TraesKARUn01G0100070"/>
</dbReference>
<dbReference type="Gramene" id="TraesKARUn01G0100580.1">
    <property type="protein sequence ID" value="cds.TraesKARUn01G0100580.1"/>
    <property type="gene ID" value="TraesKARUn01G0100580"/>
</dbReference>
<dbReference type="Gramene" id="TraesKARUn01G0101130.1">
    <property type="protein sequence ID" value="cds.TraesKARUn01G0101130.1"/>
    <property type="gene ID" value="TraesKARUn01G0101130"/>
</dbReference>
<dbReference type="Gramene" id="TraesKARUn01G0102180.1">
    <property type="protein sequence ID" value="cds.TraesKARUn01G0102180.1"/>
    <property type="gene ID" value="TraesKARUn01G0102180"/>
</dbReference>
<dbReference type="Gramene" id="TraesKARUn01G0102350.1">
    <property type="protein sequence ID" value="cds.TraesKARUn01G0102350.1"/>
    <property type="gene ID" value="TraesKARUn01G0102350"/>
</dbReference>
<dbReference type="Gramene" id="TraesKARUn01G0102500.1">
    <property type="protein sequence ID" value="cds.TraesKARUn01G0102500.1"/>
    <property type="gene ID" value="TraesKARUn01G0102500"/>
</dbReference>
<dbReference type="Gramene" id="TraesKARUn01G0102870.1">
    <property type="protein sequence ID" value="cds.TraesKARUn01G0102870.1"/>
    <property type="gene ID" value="TraesKARUn01G0102870"/>
</dbReference>
<dbReference type="Gramene" id="TraesKARUn01G0103910.1">
    <property type="protein sequence ID" value="cds.TraesKARUn01G0103910.1"/>
    <property type="gene ID" value="TraesKARUn01G0103910"/>
</dbReference>
<dbReference type="Gramene" id="TraesKARUn01G0104160.1">
    <property type="protein sequence ID" value="cds.TraesKARUn01G0104160.1"/>
    <property type="gene ID" value="TraesKARUn01G0104160"/>
</dbReference>
<dbReference type="Gramene" id="TraesKARUn01G0104190.1">
    <property type="protein sequence ID" value="cds.TraesKARUn01G0104190.1"/>
    <property type="gene ID" value="TraesKARUn01G0104190"/>
</dbReference>
<dbReference type="Gramene" id="TraesKARUn01G0104330.1">
    <property type="protein sequence ID" value="cds.TraesKARUn01G0104330.1"/>
    <property type="gene ID" value="TraesKARUn01G0104330"/>
</dbReference>
<dbReference type="Gramene" id="TraesKARUn01G0104410.1">
    <property type="protein sequence ID" value="cds.TraesKARUn01G0104410.1"/>
    <property type="gene ID" value="TraesKARUn01G0104410"/>
</dbReference>
<dbReference type="Gramene" id="TraesKARUn01G0104840.1">
    <property type="protein sequence ID" value="cds.TraesKARUn01G0104840.1"/>
    <property type="gene ID" value="TraesKARUn01G0104840"/>
</dbReference>
<dbReference type="Gramene" id="TraesKARUn01G0104920.1">
    <property type="protein sequence ID" value="cds.TraesKARUn01G0104920.1"/>
    <property type="gene ID" value="TraesKARUn01G0104920"/>
</dbReference>
<dbReference type="Gramene" id="TraesKARUn01G0105930.1">
    <property type="protein sequence ID" value="cds.TraesKARUn01G0105930.1"/>
    <property type="gene ID" value="TraesKARUn01G0105930"/>
</dbReference>
<dbReference type="Gramene" id="TraesKARUn01G0106010.1">
    <property type="protein sequence ID" value="cds.TraesKARUn01G0106010.1"/>
    <property type="gene ID" value="TraesKARUn01G0106010"/>
</dbReference>
<dbReference type="Gramene" id="TraesKARUn01G0106450.1">
    <property type="protein sequence ID" value="cds.TraesKARUn01G0106450.1"/>
    <property type="gene ID" value="TraesKARUn01G0106450"/>
</dbReference>
<dbReference type="Gramene" id="TraesKARUn01G0106880.1">
    <property type="protein sequence ID" value="cds.TraesKARUn01G0106880.1"/>
    <property type="gene ID" value="TraesKARUn01G0106880"/>
</dbReference>
<dbReference type="Gramene" id="TraesKARUn01G0107260.1">
    <property type="protein sequence ID" value="cds.TraesKARUn01G0107260.1"/>
    <property type="gene ID" value="TraesKARUn01G0107260"/>
</dbReference>
<dbReference type="Gramene" id="TraesKARUn01G0107640.1">
    <property type="protein sequence ID" value="cds.TraesKARUn01G0107640.1"/>
    <property type="gene ID" value="TraesKARUn01G0107640"/>
</dbReference>
<dbReference type="Gramene" id="TraesKARUn01G0107970.1">
    <property type="protein sequence ID" value="cds.TraesKARUn01G0107970.1"/>
    <property type="gene ID" value="TraesKARUn01G0107970"/>
</dbReference>
<dbReference type="Gramene" id="TraesKARUn01G0108820.1">
    <property type="protein sequence ID" value="cds.TraesKARUn01G0108820.1"/>
    <property type="gene ID" value="TraesKARUn01G0108820"/>
</dbReference>
<dbReference type="Gramene" id="TraesKARUn01G0108890.1">
    <property type="protein sequence ID" value="cds.TraesKARUn01G0108890.1"/>
    <property type="gene ID" value="TraesKARUn01G0108890"/>
</dbReference>
<dbReference type="Gramene" id="TraesKARUn01G0109470.1">
    <property type="protein sequence ID" value="cds.TraesKARUn01G0109470.1"/>
    <property type="gene ID" value="TraesKARUn01G0109470"/>
</dbReference>
<dbReference type="Gramene" id="TraesKARUn01G0109760.1">
    <property type="protein sequence ID" value="cds.TraesKARUn01G0109760.1"/>
    <property type="gene ID" value="TraesKARUn01G0109760"/>
</dbReference>
<dbReference type="Gramene" id="TraesKARUn01G0110160.1">
    <property type="protein sequence ID" value="cds.TraesKARUn01G0110160.1"/>
    <property type="gene ID" value="TraesKARUn01G0110160"/>
</dbReference>
<dbReference type="Gramene" id="TraesKARUn01G0110550.1">
    <property type="protein sequence ID" value="cds.TraesKARUn01G0110550.1"/>
    <property type="gene ID" value="TraesKARUn01G0110550"/>
</dbReference>
<dbReference type="Gramene" id="TraesKARUn01G0111330.1">
    <property type="protein sequence ID" value="cds.TraesKARUn01G0111330.1"/>
    <property type="gene ID" value="TraesKARUn01G0111330"/>
</dbReference>
<dbReference type="Gramene" id="TraesKARUn01G0111950.1">
    <property type="protein sequence ID" value="cds.TraesKARUn01G0111950.1"/>
    <property type="gene ID" value="TraesKARUn01G0111950"/>
</dbReference>
<dbReference type="Gramene" id="TraesKARUn01G0112010.1">
    <property type="protein sequence ID" value="cds.TraesKARUn01G0112010.1"/>
    <property type="gene ID" value="TraesKARUn01G0112010"/>
</dbReference>
<dbReference type="Gramene" id="TraesKARUn01G0112320.1">
    <property type="protein sequence ID" value="cds.TraesKARUn01G0112320.1"/>
    <property type="gene ID" value="TraesKARUn01G0112320"/>
</dbReference>
<dbReference type="Gramene" id="TraesKARUn01G0112920.1">
    <property type="protein sequence ID" value="cds.TraesKARUn01G0112920.1"/>
    <property type="gene ID" value="TraesKARUn01G0112920"/>
</dbReference>
<dbReference type="Gramene" id="TraesKARUn01G0113840.1">
    <property type="protein sequence ID" value="cds.TraesKARUn01G0113840.1"/>
    <property type="gene ID" value="TraesKARUn01G0113840"/>
</dbReference>
<dbReference type="Gramene" id="TraesKARUn01G0114350.1">
    <property type="protein sequence ID" value="cds.TraesKARUn01G0114350.1"/>
    <property type="gene ID" value="TraesKARUn01G0114350"/>
</dbReference>
<dbReference type="Gramene" id="TraesKARUn01G0115360.1">
    <property type="protein sequence ID" value="cds.TraesKARUn01G0115360.1"/>
    <property type="gene ID" value="TraesKARUn01G0115360"/>
</dbReference>
<dbReference type="Gramene" id="TraesKARUn01G0116110.1">
    <property type="protein sequence ID" value="cds.TraesKARUn01G0116110.1"/>
    <property type="gene ID" value="TraesKARUn01G0116110"/>
</dbReference>
<dbReference type="Gramene" id="TraesKARUn01G0116360.1">
    <property type="protein sequence ID" value="cds.TraesKARUn01G0116360.1"/>
    <property type="gene ID" value="TraesKARUn01G0116360"/>
</dbReference>
<dbReference type="Gramene" id="TraesKARUn01G0116430.1">
    <property type="protein sequence ID" value="cds.TraesKARUn01G0116430.1"/>
    <property type="gene ID" value="TraesKARUn01G0116430"/>
</dbReference>
<dbReference type="Gramene" id="TraesKARUn01G0117930.1">
    <property type="protein sequence ID" value="cds.TraesKARUn01G0117930.1"/>
    <property type="gene ID" value="TraesKARUn01G0117930"/>
</dbReference>
<dbReference type="Gramene" id="TraesKARUn01G0118410.1">
    <property type="protein sequence ID" value="cds.TraesKARUn01G0118410.1"/>
    <property type="gene ID" value="TraesKARUn01G0118410"/>
</dbReference>
<dbReference type="Gramene" id="TraesKARUn01G0118540.1">
    <property type="protein sequence ID" value="cds.TraesKARUn01G0118540.1"/>
    <property type="gene ID" value="TraesKARUn01G0118540"/>
</dbReference>
<dbReference type="Gramene" id="TraesKARUn01G0119900.1">
    <property type="protein sequence ID" value="cds.TraesKARUn01G0119900.1"/>
    <property type="gene ID" value="TraesKARUn01G0119900"/>
</dbReference>
<dbReference type="Gramene" id="TraesKARUn01G0120260.1">
    <property type="protein sequence ID" value="cds.TraesKARUn01G0120260.1"/>
    <property type="gene ID" value="TraesKARUn01G0120260"/>
</dbReference>
<dbReference type="Gramene" id="TraesKARUn01G0120890.1">
    <property type="protein sequence ID" value="cds.TraesKARUn01G0120890.1"/>
    <property type="gene ID" value="TraesKARUn01G0120890"/>
</dbReference>
<dbReference type="Gramene" id="TraesKARUn01G0120970.1">
    <property type="protein sequence ID" value="cds.TraesKARUn01G0120970.1"/>
    <property type="gene ID" value="TraesKARUn01G0120970"/>
</dbReference>
<dbReference type="Gramene" id="TraesKARUn01G0121230.1">
    <property type="protein sequence ID" value="cds.TraesKARUn01G0121230.1"/>
    <property type="gene ID" value="TraesKARUn01G0121230"/>
</dbReference>
<dbReference type="Gramene" id="TraesKARUn01G0121270.1">
    <property type="protein sequence ID" value="cds.TraesKARUn01G0121270.1"/>
    <property type="gene ID" value="TraesKARUn01G0121270"/>
</dbReference>
<dbReference type="Gramene" id="TraesKARUn01G0121650.1">
    <property type="protein sequence ID" value="cds.TraesKARUn01G0121650.1"/>
    <property type="gene ID" value="TraesKARUn01G0121650"/>
</dbReference>
<dbReference type="Gramene" id="TraesKARUn01G0121850.1">
    <property type="protein sequence ID" value="cds.TraesKARUn01G0121850.1"/>
    <property type="gene ID" value="TraesKARUn01G0121850"/>
</dbReference>
<dbReference type="Gramene" id="TraesKARUn01G0122130.1">
    <property type="protein sequence ID" value="cds.TraesKARUn01G0122130.1"/>
    <property type="gene ID" value="TraesKARUn01G0122130"/>
</dbReference>
<dbReference type="Gramene" id="TraesKARUn01G0122180.1">
    <property type="protein sequence ID" value="cds.TraesKARUn01G0122180.1"/>
    <property type="gene ID" value="TraesKARUn01G0122180"/>
</dbReference>
<dbReference type="Gramene" id="TraesKARUn01G0122280.1">
    <property type="protein sequence ID" value="cds.TraesKARUn01G0122280.1"/>
    <property type="gene ID" value="TraesKARUn01G0122280"/>
</dbReference>
<dbReference type="Gramene" id="TraesKARUn01G0123530.1">
    <property type="protein sequence ID" value="cds.TraesKARUn01G0123530.1"/>
    <property type="gene ID" value="TraesKARUn01G0123530"/>
</dbReference>
<dbReference type="Gramene" id="TraesKARUn01G0123740.1">
    <property type="protein sequence ID" value="cds.TraesKARUn01G0123740.1"/>
    <property type="gene ID" value="TraesKARUn01G0123740"/>
</dbReference>
<dbReference type="Gramene" id="TraesKARUn01G0124210.1">
    <property type="protein sequence ID" value="cds.TraesKARUn01G0124210.1"/>
    <property type="gene ID" value="TraesKARUn01G0124210"/>
</dbReference>
<dbReference type="Gramene" id="TraesKARUn01G0124630.1">
    <property type="protein sequence ID" value="cds.TraesKARUn01G0124630.1"/>
    <property type="gene ID" value="TraesKARUn01G0124630"/>
</dbReference>
<dbReference type="Gramene" id="TraesKARUn01G0124800.1">
    <property type="protein sequence ID" value="cds.TraesKARUn01G0124800.1"/>
    <property type="gene ID" value="TraesKARUn01G0124800"/>
</dbReference>
<dbReference type="Gramene" id="TraesKARUn01G0124960.1">
    <property type="protein sequence ID" value="cds.TraesKARUn01G0124960.1"/>
    <property type="gene ID" value="TraesKARUn01G0124960"/>
</dbReference>
<dbReference type="Gramene" id="TraesKARUn01G0125060.1">
    <property type="protein sequence ID" value="cds.TraesKARUn01G0125060.1"/>
    <property type="gene ID" value="TraesKARUn01G0125060"/>
</dbReference>
<dbReference type="Gramene" id="TraesKARUn01G0125160.1">
    <property type="protein sequence ID" value="cds.TraesKARUn01G0125160.1"/>
    <property type="gene ID" value="TraesKARUn01G0125160"/>
</dbReference>
<dbReference type="Gramene" id="TraesKARUn01G0125420.1">
    <property type="protein sequence ID" value="cds.TraesKARUn01G0125420.1"/>
    <property type="gene ID" value="TraesKARUn01G0125420"/>
</dbReference>
<dbReference type="Gramene" id="TraesKARUn01G0125520.1">
    <property type="protein sequence ID" value="cds.TraesKARUn01G0125520.1"/>
    <property type="gene ID" value="TraesKARUn01G0125520"/>
</dbReference>
<dbReference type="Gramene" id="TraesKARUn01G0126060.1">
    <property type="protein sequence ID" value="cds.TraesKARUn01G0126060.1"/>
    <property type="gene ID" value="TraesKARUn01G0126060"/>
</dbReference>
<dbReference type="Gramene" id="TraesKARUn01G0126210.1">
    <property type="protein sequence ID" value="cds.TraesKARUn01G0126210.1"/>
    <property type="gene ID" value="TraesKARUn01G0126210"/>
</dbReference>
<dbReference type="Gramene" id="TraesKARUn01G0126410.1">
    <property type="protein sequence ID" value="cds.TraesKARUn01G0126410.1"/>
    <property type="gene ID" value="TraesKARUn01G0126410"/>
</dbReference>
<dbReference type="Gramene" id="TraesKARUn01G0128070.1">
    <property type="protein sequence ID" value="cds.TraesKARUn01G0128070.1"/>
    <property type="gene ID" value="TraesKARUn01G0128070"/>
</dbReference>
<dbReference type="Gramene" id="TraesKARUn01G0128130.1">
    <property type="protein sequence ID" value="cds.TraesKARUn01G0128130.1"/>
    <property type="gene ID" value="TraesKARUn01G0128130"/>
</dbReference>
<dbReference type="Gramene" id="TraesKARUn01G0128460.1">
    <property type="protein sequence ID" value="cds.TraesKARUn01G0128460.1"/>
    <property type="gene ID" value="TraesKARUn01G0128460"/>
</dbReference>
<dbReference type="Gramene" id="TraesKARUn01G0128730.1">
    <property type="protein sequence ID" value="cds.TraesKARUn01G0128730.1"/>
    <property type="gene ID" value="TraesKARUn01G0128730"/>
</dbReference>
<dbReference type="Gramene" id="TraesKARUn01G0128910.1">
    <property type="protein sequence ID" value="cds.TraesKARUn01G0128910.1"/>
    <property type="gene ID" value="TraesKARUn01G0128910"/>
</dbReference>
<dbReference type="Gramene" id="TraesKARUn01G0128980.1">
    <property type="protein sequence ID" value="cds.TraesKARUn01G0128980.1"/>
    <property type="gene ID" value="TraesKARUn01G0128980"/>
</dbReference>
<dbReference type="Gramene" id="TraesKARUn01G0129280.1">
    <property type="protein sequence ID" value="cds.TraesKARUn01G0129280.1"/>
    <property type="gene ID" value="TraesKARUn01G0129280"/>
</dbReference>
<dbReference type="Gramene" id="TraesKARUn01G0130050.1">
    <property type="protein sequence ID" value="cds.TraesKARUn01G0130050.1"/>
    <property type="gene ID" value="TraesKARUn01G0130050"/>
</dbReference>
<dbReference type="Gramene" id="TraesKARUn01G0132370.1">
    <property type="protein sequence ID" value="cds.TraesKARUn01G0132370.1"/>
    <property type="gene ID" value="TraesKARUn01G0132370"/>
</dbReference>
<dbReference type="Gramene" id="TraesKARUn01G0133030.1">
    <property type="protein sequence ID" value="cds.TraesKARUn01G0133030.1"/>
    <property type="gene ID" value="TraesKARUn01G0133030"/>
</dbReference>
<dbReference type="Gramene" id="TraesKARUn01G0133500.1">
    <property type="protein sequence ID" value="cds.TraesKARUn01G0133500.1"/>
    <property type="gene ID" value="TraesKARUn01G0133500"/>
</dbReference>
<dbReference type="Gramene" id="TraesKARUn01G0134260.1">
    <property type="protein sequence ID" value="cds.TraesKARUn01G0134260.1"/>
    <property type="gene ID" value="TraesKARUn01G0134260"/>
</dbReference>
<dbReference type="Gramene" id="TraesKARUn01G0134770.1">
    <property type="protein sequence ID" value="cds.TraesKARUn01G0134770.1"/>
    <property type="gene ID" value="TraesKARUn01G0134770"/>
</dbReference>
<dbReference type="Gramene" id="TraesKARUn01G0134870.1">
    <property type="protein sequence ID" value="cds.TraesKARUn01G0134870.1"/>
    <property type="gene ID" value="TraesKARUn01G0134870"/>
</dbReference>
<dbReference type="Gramene" id="TraesKARUn01G0135050.1">
    <property type="protein sequence ID" value="cds.TraesKARUn01G0135050.1"/>
    <property type="gene ID" value="TraesKARUn01G0135050"/>
</dbReference>
<dbReference type="Gramene" id="TraesKARUn01G0135150.1">
    <property type="protein sequence ID" value="cds.TraesKARUn01G0135150.1"/>
    <property type="gene ID" value="TraesKARUn01G0135150"/>
</dbReference>
<dbReference type="Gramene" id="TraesKARUn01G0135350.1">
    <property type="protein sequence ID" value="cds.TraesKARUn01G0135350.1"/>
    <property type="gene ID" value="TraesKARUn01G0135350"/>
</dbReference>
<dbReference type="Gramene" id="TraesKARUn01G0135510.1">
    <property type="protein sequence ID" value="cds.TraesKARUn01G0135510.1"/>
    <property type="gene ID" value="TraesKARUn01G0135510"/>
</dbReference>
<dbReference type="Gramene" id="TraesKARUn01G0135720.1">
    <property type="protein sequence ID" value="cds.TraesKARUn01G0135720.1"/>
    <property type="gene ID" value="TraesKARUn01G0135720"/>
</dbReference>
<dbReference type="Gramene" id="TraesKARUn01G0136050.1">
    <property type="protein sequence ID" value="cds.TraesKARUn01G0136050.1"/>
    <property type="gene ID" value="TraesKARUn01G0136050"/>
</dbReference>
<dbReference type="Gramene" id="TraesKARUn01G0136450.1">
    <property type="protein sequence ID" value="cds.TraesKARUn01G0136450.1"/>
    <property type="gene ID" value="TraesKARUn01G0136450"/>
</dbReference>
<dbReference type="Gramene" id="TraesKARUn01G0137290.1">
    <property type="protein sequence ID" value="cds.TraesKARUn01G0137290.1"/>
    <property type="gene ID" value="TraesKARUn01G0137290"/>
</dbReference>
<dbReference type="Gramene" id="TraesKARUn01G0137400.1">
    <property type="protein sequence ID" value="cds.TraesKARUn01G0137400.1"/>
    <property type="gene ID" value="TraesKARUn01G0137400"/>
</dbReference>
<dbReference type="Gramene" id="TraesKARUn01G0137920.1">
    <property type="protein sequence ID" value="cds.TraesKARUn01G0137920.1"/>
    <property type="gene ID" value="TraesKARUn01G0137920"/>
</dbReference>
<dbReference type="Gramene" id="TraesKARUn01G0139070.1">
    <property type="protein sequence ID" value="cds.TraesKARUn01G0139070.1"/>
    <property type="gene ID" value="TraesKARUn01G0139070"/>
</dbReference>
<dbReference type="Gramene" id="TraesKARUn01G0139990.1">
    <property type="protein sequence ID" value="cds.TraesKARUn01G0139990.1"/>
    <property type="gene ID" value="TraesKARUn01G0139990"/>
</dbReference>
<dbReference type="Gramene" id="TraesKARUn01G0140420.1">
    <property type="protein sequence ID" value="cds.TraesKARUn01G0140420.1"/>
    <property type="gene ID" value="TraesKARUn01G0140420"/>
</dbReference>
<dbReference type="Gramene" id="TraesKARUn01G0141170.1">
    <property type="protein sequence ID" value="cds.TraesKARUn01G0141170.1"/>
    <property type="gene ID" value="TraesKARUn01G0141170"/>
</dbReference>
<dbReference type="Gramene" id="TraesKARUn01G0141470.1">
    <property type="protein sequence ID" value="cds.TraesKARUn01G0141470.1"/>
    <property type="gene ID" value="TraesKARUn01G0141470"/>
</dbReference>
<dbReference type="Gramene" id="TraesKARUn01G0142010.1">
    <property type="protein sequence ID" value="cds.TraesKARUn01G0142010.1"/>
    <property type="gene ID" value="TraesKARUn01G0142010"/>
</dbReference>
<dbReference type="Gramene" id="TraesKARUn01G0142210.1">
    <property type="protein sequence ID" value="cds.TraesKARUn01G0142210.1"/>
    <property type="gene ID" value="TraesKARUn01G0142210"/>
</dbReference>
<dbReference type="Gramene" id="TraesKARUn01G0142390.1">
    <property type="protein sequence ID" value="cds.TraesKARUn01G0142390.1"/>
    <property type="gene ID" value="TraesKARUn01G0142390"/>
</dbReference>
<dbReference type="Gramene" id="TraesKARUn01G0142710.1">
    <property type="protein sequence ID" value="cds.TraesKARUn01G0142710.1"/>
    <property type="gene ID" value="TraesKARUn01G0142710"/>
</dbReference>
<dbReference type="Gramene" id="TraesKARUn01G0143160.1">
    <property type="protein sequence ID" value="cds.TraesKARUn01G0143160.1"/>
    <property type="gene ID" value="TraesKARUn01G0143160"/>
</dbReference>
<dbReference type="Gramene" id="TraesKARUn01G0143370.1">
    <property type="protein sequence ID" value="cds.TraesKARUn01G0143370.1"/>
    <property type="gene ID" value="TraesKARUn01G0143370"/>
</dbReference>
<dbReference type="Gramene" id="TraesKARUn01G0143440.1">
    <property type="protein sequence ID" value="cds.TraesKARUn01G0143440.1"/>
    <property type="gene ID" value="TraesKARUn01G0143440"/>
</dbReference>
<dbReference type="Gramene" id="TraesKARUn01G0143560.1">
    <property type="protein sequence ID" value="cds.TraesKARUn01G0143560.1"/>
    <property type="gene ID" value="TraesKARUn01G0143560"/>
</dbReference>
<dbReference type="Gramene" id="TraesKARUn01G0143670.1">
    <property type="protein sequence ID" value="cds.TraesKARUn01G0143670.1"/>
    <property type="gene ID" value="TraesKARUn01G0143670"/>
</dbReference>
<dbReference type="Gramene" id="TraesKARUn01G0143880.1">
    <property type="protein sequence ID" value="cds.TraesKARUn01G0143880.1"/>
    <property type="gene ID" value="TraesKARUn01G0143880"/>
</dbReference>
<dbReference type="Gramene" id="TraesKARUn01G0144430.1">
    <property type="protein sequence ID" value="cds.TraesKARUn01G0144430.1"/>
    <property type="gene ID" value="TraesKARUn01G0144430"/>
</dbReference>
<dbReference type="Gramene" id="TraesKARUn01G0144480.1">
    <property type="protein sequence ID" value="cds.TraesKARUn01G0144480.1"/>
    <property type="gene ID" value="TraesKARUn01G0144480"/>
</dbReference>
<dbReference type="Gramene" id="TraesKARUn01G0144710.1">
    <property type="protein sequence ID" value="cds.TraesKARUn01G0144710.1"/>
    <property type="gene ID" value="TraesKARUn01G0144710"/>
</dbReference>
<dbReference type="Gramene" id="TraesKARUn01G0144970.1">
    <property type="protein sequence ID" value="cds.TraesKARUn01G0144970.1"/>
    <property type="gene ID" value="TraesKARUn01G0144970"/>
</dbReference>
<dbReference type="Gramene" id="TraesKARUn01G0145470.1">
    <property type="protein sequence ID" value="cds.TraesKARUn01G0145470.1"/>
    <property type="gene ID" value="TraesKARUn01G0145470"/>
</dbReference>
<dbReference type="Gramene" id="TraesKARUn01G0145660.1">
    <property type="protein sequence ID" value="cds.TraesKARUn01G0145660.1"/>
    <property type="gene ID" value="TraesKARUn01G0145660"/>
</dbReference>
<dbReference type="Gramene" id="TraesKARUn01G0145870.1">
    <property type="protein sequence ID" value="cds.TraesKARUn01G0145870.1"/>
    <property type="gene ID" value="TraesKARUn01G0145870"/>
</dbReference>
<dbReference type="Gramene" id="TraesKARUn01G0146040.1">
    <property type="protein sequence ID" value="cds.TraesKARUn01G0146040.1"/>
    <property type="gene ID" value="TraesKARUn01G0146040"/>
</dbReference>
<dbReference type="Gramene" id="TraesKARUn01G0146360.1">
    <property type="protein sequence ID" value="cds.TraesKARUn01G0146360.1"/>
    <property type="gene ID" value="TraesKARUn01G0146360"/>
</dbReference>
<dbReference type="Gramene" id="TraesKARUn01G0147160.1">
    <property type="protein sequence ID" value="cds.TraesKARUn01G0147160.1"/>
    <property type="gene ID" value="TraesKARUn01G0147160"/>
</dbReference>
<dbReference type="Gramene" id="TraesKARUn01G0147350.1">
    <property type="protein sequence ID" value="cds.TraesKARUn01G0147350.1"/>
    <property type="gene ID" value="TraesKARUn01G0147350"/>
</dbReference>
<dbReference type="Gramene" id="TraesKARUn01G0147720.1">
    <property type="protein sequence ID" value="cds.TraesKARUn01G0147720.1"/>
    <property type="gene ID" value="TraesKARUn01G0147720"/>
</dbReference>
<dbReference type="Gramene" id="TraesKARUn01G0148060.1">
    <property type="protein sequence ID" value="cds.TraesKARUn01G0148060.1"/>
    <property type="gene ID" value="TraesKARUn01G0148060"/>
</dbReference>
<dbReference type="Gramene" id="TraesKARUn01G0148190.1">
    <property type="protein sequence ID" value="cds.TraesKARUn01G0148190.1"/>
    <property type="gene ID" value="TraesKARUn01G0148190"/>
</dbReference>
<dbReference type="Gramene" id="TraesKARUn01G0148270.1">
    <property type="protein sequence ID" value="cds.TraesKARUn01G0148270.1"/>
    <property type="gene ID" value="TraesKARUn01G0148270"/>
</dbReference>
<dbReference type="Gramene" id="TraesKARUn01G0148370.1">
    <property type="protein sequence ID" value="cds.TraesKARUn01G0148370.1"/>
    <property type="gene ID" value="TraesKARUn01G0148370"/>
</dbReference>
<dbReference type="Gramene" id="TraesKARUn01G0148620.1">
    <property type="protein sequence ID" value="cds.TraesKARUn01G0148620.1"/>
    <property type="gene ID" value="TraesKARUn01G0148620"/>
</dbReference>
<dbReference type="Gramene" id="TraesKARUn01G0148970.1">
    <property type="protein sequence ID" value="cds.TraesKARUn01G0148970.1"/>
    <property type="gene ID" value="TraesKARUn01G0148970"/>
</dbReference>
<dbReference type="Gramene" id="TraesKARUn01G0149260.1">
    <property type="protein sequence ID" value="cds.TraesKARUn01G0149260.1"/>
    <property type="gene ID" value="TraesKARUn01G0149260"/>
</dbReference>
<dbReference type="Gramene" id="TraesKARUn01G0149510.1">
    <property type="protein sequence ID" value="cds.TraesKARUn01G0149510.1"/>
    <property type="gene ID" value="TraesKARUn01G0149510"/>
</dbReference>
<dbReference type="Gramene" id="TraesKARUn01G0149700.1">
    <property type="protein sequence ID" value="cds.TraesKARUn01G0149700.1"/>
    <property type="gene ID" value="TraesKARUn01G0149700"/>
</dbReference>
<dbReference type="Gramene" id="TraesKARUn01G0150580.1">
    <property type="protein sequence ID" value="cds.TraesKARUn01G0150580.1"/>
    <property type="gene ID" value="TraesKARUn01G0150580"/>
</dbReference>
<dbReference type="Gramene" id="TraesKARUn01G0151020.1">
    <property type="protein sequence ID" value="cds.TraesKARUn01G0151020.1"/>
    <property type="gene ID" value="TraesKARUn01G0151020"/>
</dbReference>
<dbReference type="Gramene" id="TraesKARUn01G0151130.1">
    <property type="protein sequence ID" value="cds.TraesKARUn01G0151130.1"/>
    <property type="gene ID" value="TraesKARUn01G0151130"/>
</dbReference>
<dbReference type="Gramene" id="TraesKARUn01G0151680.1">
    <property type="protein sequence ID" value="cds.TraesKARUn01G0151680.1"/>
    <property type="gene ID" value="TraesKARUn01G0151680"/>
</dbReference>
<dbReference type="Gramene" id="TraesKARUn01G0152460.1">
    <property type="protein sequence ID" value="cds.TraesKARUn01G0152460.1"/>
    <property type="gene ID" value="TraesKARUn01G0152460"/>
</dbReference>
<dbReference type="Gramene" id="TraesKARUn01G0152670.1">
    <property type="protein sequence ID" value="cds.TraesKARUn01G0152670.1"/>
    <property type="gene ID" value="TraesKARUn01G0152670"/>
</dbReference>
<dbReference type="Gramene" id="TraesKARUn01G0152970.1">
    <property type="protein sequence ID" value="cds.TraesKARUn01G0152970.1"/>
    <property type="gene ID" value="TraesKARUn01G0152970"/>
</dbReference>
<dbReference type="Gramene" id="TraesKARUn01G0153090.1">
    <property type="protein sequence ID" value="cds.TraesKARUn01G0153090.1"/>
    <property type="gene ID" value="TraesKARUn01G0153090"/>
</dbReference>
<dbReference type="Gramene" id="TraesKARUn01G0153180.1">
    <property type="protein sequence ID" value="cds.TraesKARUn01G0153180.1"/>
    <property type="gene ID" value="TraesKARUn01G0153180"/>
</dbReference>
<dbReference type="Gramene" id="TraesKARUn01G0153610.1">
    <property type="protein sequence ID" value="cds.TraesKARUn01G0153610.1"/>
    <property type="gene ID" value="TraesKARUn01G0153610"/>
</dbReference>
<dbReference type="Gramene" id="TraesKARUn01G0154310.1">
    <property type="protein sequence ID" value="cds.TraesKARUn01G0154310.1"/>
    <property type="gene ID" value="TraesKARUn01G0154310"/>
</dbReference>
<dbReference type="Gramene" id="TraesKARUn01G0154380.1">
    <property type="protein sequence ID" value="cds.TraesKARUn01G0154380.1"/>
    <property type="gene ID" value="TraesKARUn01G0154380"/>
</dbReference>
<dbReference type="Gramene" id="TraesKARUn01G0155250.1">
    <property type="protein sequence ID" value="cds.TraesKARUn01G0155250.1"/>
    <property type="gene ID" value="TraesKARUn01G0155250"/>
</dbReference>
<dbReference type="Gramene" id="TraesKARUn01G0155310.1">
    <property type="protein sequence ID" value="cds.TraesKARUn01G0155310.1"/>
    <property type="gene ID" value="TraesKARUn01G0155310"/>
</dbReference>
<dbReference type="Gramene" id="TraesKARUn01G0155480.1">
    <property type="protein sequence ID" value="cds.TraesKARUn01G0155480.1"/>
    <property type="gene ID" value="TraesKARUn01G0155480"/>
</dbReference>
<dbReference type="Gramene" id="TraesKARUn01G0156400.1">
    <property type="protein sequence ID" value="cds.TraesKARUn01G0156400.1"/>
    <property type="gene ID" value="TraesKARUn01G0156400"/>
</dbReference>
<dbReference type="Gramene" id="TraesKARUn01G0156520.1">
    <property type="protein sequence ID" value="cds.TraesKARUn01G0156520.1"/>
    <property type="gene ID" value="TraesKARUn01G0156520"/>
</dbReference>
<dbReference type="Gramene" id="TraesKARUn01G0156910.1">
    <property type="protein sequence ID" value="cds.TraesKARUn01G0156910.1"/>
    <property type="gene ID" value="TraesKARUn01G0156910"/>
</dbReference>
<dbReference type="Gramene" id="TraesKARUn01G0157100.1">
    <property type="protein sequence ID" value="cds.TraesKARUn01G0157100.1"/>
    <property type="gene ID" value="TraesKARUn01G0157100"/>
</dbReference>
<dbReference type="Gramene" id="TraesKARUn01G0157170.1">
    <property type="protein sequence ID" value="cds.TraesKARUn01G0157170.1"/>
    <property type="gene ID" value="TraesKARUn01G0157170"/>
</dbReference>
<dbReference type="Gramene" id="TraesKARUn01G0157290.1">
    <property type="protein sequence ID" value="cds.TraesKARUn01G0157290.1"/>
    <property type="gene ID" value="TraesKARUn01G0157290"/>
</dbReference>
<dbReference type="Gramene" id="TraesKARUn01G0157990.1">
    <property type="protein sequence ID" value="cds.TraesKARUn01G0157990.1"/>
    <property type="gene ID" value="TraesKARUn01G0157990"/>
</dbReference>
<dbReference type="Gramene" id="TraesKARUn01G0158880.1">
    <property type="protein sequence ID" value="cds.TraesKARUn01G0158880.1"/>
    <property type="gene ID" value="TraesKARUn01G0158880"/>
</dbReference>
<dbReference type="Gramene" id="TraesKARUn01G0159050.1">
    <property type="protein sequence ID" value="cds.TraesKARUn01G0159050.1"/>
    <property type="gene ID" value="TraesKARUn01G0159050"/>
</dbReference>
<dbReference type="Gramene" id="TraesKARUn01G0160190.1">
    <property type="protein sequence ID" value="cds.TraesKARUn01G0160190.1"/>
    <property type="gene ID" value="TraesKARUn01G0160190"/>
</dbReference>
<dbReference type="Gramene" id="TraesKARUn01G0160480.1">
    <property type="protein sequence ID" value="cds.TraesKARUn01G0160480.1"/>
    <property type="gene ID" value="TraesKARUn01G0160480"/>
</dbReference>
<dbReference type="Gramene" id="TraesKARUn01G0162100.1">
    <property type="protein sequence ID" value="cds.TraesKARUn01G0162100.1"/>
    <property type="gene ID" value="TraesKARUn01G0162100"/>
</dbReference>
<dbReference type="Gramene" id="TraesKARUn01G0162190.1">
    <property type="protein sequence ID" value="cds.TraesKARUn01G0162190.1"/>
    <property type="gene ID" value="TraesKARUn01G0162190"/>
</dbReference>
<dbReference type="Gramene" id="TraesKARUn01G0162530.1">
    <property type="protein sequence ID" value="cds.TraesKARUn01G0162530.1"/>
    <property type="gene ID" value="TraesKARUn01G0162530"/>
</dbReference>
<dbReference type="Gramene" id="TraesKARUn01G0162710.1">
    <property type="protein sequence ID" value="cds.TraesKARUn01G0162710.1"/>
    <property type="gene ID" value="TraesKARUn01G0162710"/>
</dbReference>
<dbReference type="Gramene" id="TraesKARUn01G0163090.1">
    <property type="protein sequence ID" value="cds.TraesKARUn01G0163090.1"/>
    <property type="gene ID" value="TraesKARUn01G0163090"/>
</dbReference>
<dbReference type="Gramene" id="TraesKARUn01G0163350.1">
    <property type="protein sequence ID" value="cds.TraesKARUn01G0163350.1"/>
    <property type="gene ID" value="TraesKARUn01G0163350"/>
</dbReference>
<dbReference type="Gramene" id="TraesKARUn01G0164070.1">
    <property type="protein sequence ID" value="cds.TraesKARUn01G0164070.1"/>
    <property type="gene ID" value="TraesKARUn01G0164070"/>
</dbReference>
<dbReference type="Gramene" id="TraesKARUn01G0164250.1">
    <property type="protein sequence ID" value="cds.TraesKARUn01G0164250.1"/>
    <property type="gene ID" value="TraesKARUn01G0164250"/>
</dbReference>
<dbReference type="Gramene" id="TraesKARUn01G0165680.1">
    <property type="protein sequence ID" value="cds.TraesKARUn01G0165680.1"/>
    <property type="gene ID" value="TraesKARUn01G0165680"/>
</dbReference>
<dbReference type="Gramene" id="TraesKARUn01G0165740.1">
    <property type="protein sequence ID" value="cds.TraesKARUn01G0165740.1"/>
    <property type="gene ID" value="TraesKARUn01G0165740"/>
</dbReference>
<dbReference type="Gramene" id="TraesKARUn01G0166220.1">
    <property type="protein sequence ID" value="cds.TraesKARUn01G0166220.1"/>
    <property type="gene ID" value="TraesKARUn01G0166220"/>
</dbReference>
<dbReference type="Gramene" id="TraesKARUn01G0166380.1">
    <property type="protein sequence ID" value="cds.TraesKARUn01G0166380.1"/>
    <property type="gene ID" value="TraesKARUn01G0166380"/>
</dbReference>
<dbReference type="Gramene" id="TraesKARUn01G0166460.1">
    <property type="protein sequence ID" value="cds.TraesKARUn01G0166460.1"/>
    <property type="gene ID" value="TraesKARUn01G0166460"/>
</dbReference>
<dbReference type="Gramene" id="TraesKARUn01G0166520.1">
    <property type="protein sequence ID" value="cds.TraesKARUn01G0166520.1"/>
    <property type="gene ID" value="TraesKARUn01G0166520"/>
</dbReference>
<dbReference type="Gramene" id="TraesKARUn01G0166780.1">
    <property type="protein sequence ID" value="cds.TraesKARUn01G0166780.1"/>
    <property type="gene ID" value="TraesKARUn01G0166780"/>
</dbReference>
<dbReference type="Gramene" id="TraesKARUn01G0168050.1">
    <property type="protein sequence ID" value="cds.TraesKARUn01G0168050.1"/>
    <property type="gene ID" value="TraesKARUn01G0168050"/>
</dbReference>
<dbReference type="Gramene" id="TraesKARUn01G0168200.1">
    <property type="protein sequence ID" value="cds.TraesKARUn01G0168200.1"/>
    <property type="gene ID" value="TraesKARUn01G0168200"/>
</dbReference>
<dbReference type="Gramene" id="TraesKARUn01G0168370.1">
    <property type="protein sequence ID" value="cds.TraesKARUn01G0168370.1"/>
    <property type="gene ID" value="TraesKARUn01G0168370"/>
</dbReference>
<dbReference type="Gramene" id="TraesKARUn01G0168410.1">
    <property type="protein sequence ID" value="cds.TraesKARUn01G0168410.1"/>
    <property type="gene ID" value="TraesKARUn01G0168410"/>
</dbReference>
<dbReference type="Gramene" id="TraesKARUn01G0168500.1">
    <property type="protein sequence ID" value="cds.TraesKARUn01G0168500.1"/>
    <property type="gene ID" value="TraesKARUn01G0168500"/>
</dbReference>
<dbReference type="Gramene" id="TraesKARUn01G0169180.1">
    <property type="protein sequence ID" value="cds.TraesKARUn01G0169180.1"/>
    <property type="gene ID" value="TraesKARUn01G0169180"/>
</dbReference>
<dbReference type="Gramene" id="TraesKARUn01G0169510.1">
    <property type="protein sequence ID" value="cds.TraesKARUn01G0169510.1"/>
    <property type="gene ID" value="TraesKARUn01G0169510"/>
</dbReference>
<dbReference type="Gramene" id="TraesKARUn01G0170000.1">
    <property type="protein sequence ID" value="cds.TraesKARUn01G0170000.1"/>
    <property type="gene ID" value="TraesKARUn01G0170000"/>
</dbReference>
<dbReference type="Gramene" id="TraesKARUn01G0170040.1">
    <property type="protein sequence ID" value="cds.TraesKARUn01G0170040.1"/>
    <property type="gene ID" value="TraesKARUn01G0170040"/>
</dbReference>
<dbReference type="Gramene" id="TraesKARUn01G0172700.1">
    <property type="protein sequence ID" value="cds.TraesKARUn01G0172700.1"/>
    <property type="gene ID" value="TraesKARUn01G0172700"/>
</dbReference>
<dbReference type="Gramene" id="TraesKARUn01G0172820.1">
    <property type="protein sequence ID" value="cds.TraesKARUn01G0172820.1"/>
    <property type="gene ID" value="TraesKARUn01G0172820"/>
</dbReference>
<dbReference type="Gramene" id="TraesKARUn01G0173090.1">
    <property type="protein sequence ID" value="cds.TraesKARUn01G0173090.1"/>
    <property type="gene ID" value="TraesKARUn01G0173090"/>
</dbReference>
<dbReference type="Gramene" id="TraesKARUn01G0174220.1">
    <property type="protein sequence ID" value="cds.TraesKARUn01G0174220.1"/>
    <property type="gene ID" value="TraesKARUn01G0174220"/>
</dbReference>
<dbReference type="Gramene" id="TraesKARUn01G0174380.1">
    <property type="protein sequence ID" value="cds.TraesKARUn01G0174380.1"/>
    <property type="gene ID" value="TraesKARUn01G0174380"/>
</dbReference>
<dbReference type="Gramene" id="TraesKARUn01G0178260.1">
    <property type="protein sequence ID" value="cds.TraesKARUn01G0178260.1"/>
    <property type="gene ID" value="TraesKARUn01G0178260"/>
</dbReference>
<dbReference type="Gramene" id="TraesKARUn01G0179070.1">
    <property type="protein sequence ID" value="cds.TraesKARUn01G0179070.1"/>
    <property type="gene ID" value="TraesKARUn01G0179070"/>
</dbReference>
<dbReference type="Gramene" id="TraesKARUn01G0179450.1">
    <property type="protein sequence ID" value="cds.TraesKARUn01G0179450.1"/>
    <property type="gene ID" value="TraesKARUn01G0179450"/>
</dbReference>
<dbReference type="Gramene" id="TraesKARUn01G0181740.1">
    <property type="protein sequence ID" value="cds.TraesKARUn01G0181740.1"/>
    <property type="gene ID" value="TraesKARUn01G0181740"/>
</dbReference>
<dbReference type="Gramene" id="TraesKARUn01G0185540.1">
    <property type="protein sequence ID" value="cds.TraesKARUn01G0185540.1"/>
    <property type="gene ID" value="TraesKARUn01G0185540"/>
</dbReference>
<dbReference type="Gramene" id="TraesKARUn01G0186560.1">
    <property type="protein sequence ID" value="cds.TraesKARUn01G0186560.1"/>
    <property type="gene ID" value="TraesKARUn01G0186560"/>
</dbReference>
<dbReference type="Gramene" id="TraesKARUn01G0188320.1">
    <property type="protein sequence ID" value="cds.TraesKARUn01G0188320.1"/>
    <property type="gene ID" value="TraesKARUn01G0188320"/>
</dbReference>
<dbReference type="Gramene" id="TraesKARUn01G0189000.1">
    <property type="protein sequence ID" value="cds.TraesKARUn01G0189000.1"/>
    <property type="gene ID" value="TraesKARUn01G0189000"/>
</dbReference>
<dbReference type="Gramene" id="TraesKARUn01G0193820.1">
    <property type="protein sequence ID" value="cds.TraesKARUn01G0193820.1"/>
    <property type="gene ID" value="TraesKARUn01G0193820"/>
</dbReference>
<dbReference type="Gramene" id="TraesKARUn01G0194920.1">
    <property type="protein sequence ID" value="cds.TraesKARUn01G0194920.1"/>
    <property type="gene ID" value="TraesKARUn01G0194920"/>
</dbReference>
<dbReference type="Gramene" id="TraesPARA_EIv1.0_2014540.1">
    <property type="protein sequence ID" value="TraesPARA_EIv1.0_2014540.1.CDS1"/>
    <property type="gene ID" value="TraesPARA_EIv1.0_2014540"/>
</dbReference>
<dbReference type="Gramene" id="TraesPARA_EIv1.0_2643640.1">
    <property type="protein sequence ID" value="TraesPARA_EIv1.0_2643640.1.CDS1"/>
    <property type="gene ID" value="TraesPARA_EIv1.0_2643640"/>
</dbReference>
<dbReference type="Gramene" id="TraesPARA_EIv1.0_2643880.1">
    <property type="protein sequence ID" value="TraesPARA_EIv1.0_2643880.1.CDS1"/>
    <property type="gene ID" value="TraesPARA_EIv1.0_2643880"/>
</dbReference>
<dbReference type="Gramene" id="TraesPARA_EIv1.0_2644600.1">
    <property type="protein sequence ID" value="TraesPARA_EIv1.0_2644600.1.CDS1"/>
    <property type="gene ID" value="TraesPARA_EIv1.0_2644600"/>
</dbReference>
<dbReference type="Gramene" id="TraesPARA_EIv1.0_2645010.1">
    <property type="protein sequence ID" value="TraesPARA_EIv1.0_2645010.1.CDS1"/>
    <property type="gene ID" value="TraesPARA_EIv1.0_2645010"/>
</dbReference>
<dbReference type="Gramene" id="TraesPARA_EIv1.0_2645590.1">
    <property type="protein sequence ID" value="TraesPARA_EIv1.0_2645590.1.CDS1"/>
    <property type="gene ID" value="TraesPARA_EIv1.0_2645590"/>
</dbReference>
<dbReference type="Gramene" id="TraesPARA_EIv1.0_2646230.1">
    <property type="protein sequence ID" value="TraesPARA_EIv1.0_2646230.1.CDS1"/>
    <property type="gene ID" value="TraesPARA_EIv1.0_2646230"/>
</dbReference>
<dbReference type="Gramene" id="TraesPARA_EIv1.0_2646890.1">
    <property type="protein sequence ID" value="TraesPARA_EIv1.0_2646890.1.CDS1"/>
    <property type="gene ID" value="TraesPARA_EIv1.0_2646890"/>
</dbReference>
<dbReference type="Gramene" id="TraesPARA_EIv1.0_2647410.1">
    <property type="protein sequence ID" value="TraesPARA_EIv1.0_2647410.1.CDS1"/>
    <property type="gene ID" value="TraesPARA_EIv1.0_2647410"/>
</dbReference>
<dbReference type="Gramene" id="TraesPARA_EIv1.0_2648050.1">
    <property type="protein sequence ID" value="TraesPARA_EIv1.0_2648050.1.CDS1"/>
    <property type="gene ID" value="TraesPARA_EIv1.0_2648050"/>
</dbReference>
<dbReference type="Gramene" id="TraesPARA_EIv1.0_2648210.1">
    <property type="protein sequence ID" value="TraesPARA_EIv1.0_2648210.1.CDS1"/>
    <property type="gene ID" value="TraesPARA_EIv1.0_2648210"/>
</dbReference>
<dbReference type="Gramene" id="TraesPARA_EIv1.0_2649090.1">
    <property type="protein sequence ID" value="TraesPARA_EIv1.0_2649090.1.CDS1"/>
    <property type="gene ID" value="TraesPARA_EIv1.0_2649090"/>
</dbReference>
<dbReference type="Gramene" id="TraesPARA_EIv1.0_2649370.1">
    <property type="protein sequence ID" value="TraesPARA_EIv1.0_2649370.1.CDS1"/>
    <property type="gene ID" value="TraesPARA_EIv1.0_2649370"/>
</dbReference>
<dbReference type="Gramene" id="TraesPARA_EIv1.0_2649490.1">
    <property type="protein sequence ID" value="TraesPARA_EIv1.0_2649490.1.CDS1"/>
    <property type="gene ID" value="TraesPARA_EIv1.0_2649490"/>
</dbReference>
<dbReference type="Gramene" id="TraesPARA_EIv1.0_2649630.1">
    <property type="protein sequence ID" value="TraesPARA_EIv1.0_2649630.1.CDS1"/>
    <property type="gene ID" value="TraesPARA_EIv1.0_2649630"/>
</dbReference>
<dbReference type="Gramene" id="TraesPARA_EIv1.0_2650080.1">
    <property type="protein sequence ID" value="TraesPARA_EIv1.0_2650080.1.CDS1"/>
    <property type="gene ID" value="TraesPARA_EIv1.0_2650080"/>
</dbReference>
<dbReference type="Gramene" id="TraesPARA_EIv1.0_2650430.1">
    <property type="protein sequence ID" value="TraesPARA_EIv1.0_2650430.1.CDS1"/>
    <property type="gene ID" value="TraesPARA_EIv1.0_2650430"/>
</dbReference>
<dbReference type="Gramene" id="TraesPARA_EIv1.0_2651070.1">
    <property type="protein sequence ID" value="TraesPARA_EIv1.0_2651070.1.CDS1"/>
    <property type="gene ID" value="TraesPARA_EIv1.0_2651070"/>
</dbReference>
<dbReference type="Gramene" id="TraesPARA_EIv1.0_2652310.1">
    <property type="protein sequence ID" value="TraesPARA_EIv1.0_2652310.1.CDS1"/>
    <property type="gene ID" value="TraesPARA_EIv1.0_2652310"/>
</dbReference>
<dbReference type="Gramene" id="TraesPARA_EIv1.0_2652590.1">
    <property type="protein sequence ID" value="TraesPARA_EIv1.0_2652590.1.CDS1"/>
    <property type="gene ID" value="TraesPARA_EIv1.0_2652590"/>
</dbReference>
<dbReference type="Gramene" id="TraesPARA_EIv1.0_2652700.1">
    <property type="protein sequence ID" value="TraesPARA_EIv1.0_2652700.1.CDS1"/>
    <property type="gene ID" value="TraesPARA_EIv1.0_2652700"/>
</dbReference>
<dbReference type="Gramene" id="TraesPARA_EIv1.0_2652880.1">
    <property type="protein sequence ID" value="TraesPARA_EIv1.0_2652880.1.CDS1"/>
    <property type="gene ID" value="TraesPARA_EIv1.0_2652880"/>
</dbReference>
<dbReference type="Gramene" id="TraesPARA_EIv1.0_2653000.1">
    <property type="protein sequence ID" value="TraesPARA_EIv1.0_2653000.1.CDS1"/>
    <property type="gene ID" value="TraesPARA_EIv1.0_2653000"/>
</dbReference>
<dbReference type="Gramene" id="TraesPARA_EIv1.0_2653380.1">
    <property type="protein sequence ID" value="TraesPARA_EIv1.0_2653380.1.CDS1"/>
    <property type="gene ID" value="TraesPARA_EIv1.0_2653380"/>
</dbReference>
<dbReference type="Gramene" id="TraesPARA_EIv1.0_2653880.1">
    <property type="protein sequence ID" value="TraesPARA_EIv1.0_2653880.1.CDS1"/>
    <property type="gene ID" value="TraesPARA_EIv1.0_2653880"/>
</dbReference>
<dbReference type="Gramene" id="TraesPARA_EIv1.0_2655260.1">
    <property type="protein sequence ID" value="TraesPARA_EIv1.0_2655260.1.CDS1"/>
    <property type="gene ID" value="TraesPARA_EIv1.0_2655260"/>
</dbReference>
<dbReference type="Gramene" id="TraesPARA_EIv1.0_2655620.1">
    <property type="protein sequence ID" value="TraesPARA_EIv1.0_2655620.1.CDS1"/>
    <property type="gene ID" value="TraesPARA_EIv1.0_2655620"/>
</dbReference>
<dbReference type="Gramene" id="TraesPARA_EIv1.0_2655720.1">
    <property type="protein sequence ID" value="TraesPARA_EIv1.0_2655720.1.CDS1"/>
    <property type="gene ID" value="TraesPARA_EIv1.0_2655720"/>
</dbReference>
<dbReference type="Gramene" id="TraesPARA_EIv1.0_2655830.1">
    <property type="protein sequence ID" value="TraesPARA_EIv1.0_2655830.1.CDS1"/>
    <property type="gene ID" value="TraesPARA_EIv1.0_2655830"/>
</dbReference>
<dbReference type="Gramene" id="TraesPARA_EIv1.0_2656100.1">
    <property type="protein sequence ID" value="TraesPARA_EIv1.0_2656100.1.CDS1"/>
    <property type="gene ID" value="TraesPARA_EIv1.0_2656100"/>
</dbReference>
<dbReference type="Gramene" id="TraesPARA_EIv1.0_2656420.1">
    <property type="protein sequence ID" value="TraesPARA_EIv1.0_2656420.1.CDS1"/>
    <property type="gene ID" value="TraesPARA_EIv1.0_2656420"/>
</dbReference>
<dbReference type="Gramene" id="TraesPARA_EIv1.0_2657140.1">
    <property type="protein sequence ID" value="TraesPARA_EIv1.0_2657140.1.CDS1"/>
    <property type="gene ID" value="TraesPARA_EIv1.0_2657140"/>
</dbReference>
<dbReference type="Gramene" id="TraesPARA_EIv1.0_2658360.1">
    <property type="protein sequence ID" value="TraesPARA_EIv1.0_2658360.1.CDS1"/>
    <property type="gene ID" value="TraesPARA_EIv1.0_2658360"/>
</dbReference>
<dbReference type="Gramene" id="TraesPARA_EIv1.0_2658500.1">
    <property type="protein sequence ID" value="TraesPARA_EIv1.0_2658500.1.CDS1"/>
    <property type="gene ID" value="TraesPARA_EIv1.0_2658500"/>
</dbReference>
<dbReference type="Gramene" id="TraesPARA_EIv1.0_2660000.1">
    <property type="protein sequence ID" value="TraesPARA_EIv1.0_2660000.1.CDS1"/>
    <property type="gene ID" value="TraesPARA_EIv1.0_2660000"/>
</dbReference>
<dbReference type="Gramene" id="TraesPARA_EIv1.0_2660320.1">
    <property type="protein sequence ID" value="TraesPARA_EIv1.0_2660320.1.CDS1"/>
    <property type="gene ID" value="TraesPARA_EIv1.0_2660320"/>
</dbReference>
<dbReference type="Gramene" id="TraesPARA_EIv1.0_2663430.1">
    <property type="protein sequence ID" value="TraesPARA_EIv1.0_2663430.1.CDS1"/>
    <property type="gene ID" value="TraesPARA_EIv1.0_2663430"/>
</dbReference>
<dbReference type="Gramene" id="TraesPARA_EIv1.0_2663530.1">
    <property type="protein sequence ID" value="TraesPARA_EIv1.0_2663530.1.CDS1"/>
    <property type="gene ID" value="TraesPARA_EIv1.0_2663530"/>
</dbReference>
<dbReference type="Gramene" id="TraesPARA_EIv1.0_2663700.1">
    <property type="protein sequence ID" value="TraesPARA_EIv1.0_2663700.1.CDS1"/>
    <property type="gene ID" value="TraesPARA_EIv1.0_2663700"/>
</dbReference>
<dbReference type="Gramene" id="TraesPARA_EIv1.0_2665750.1">
    <property type="protein sequence ID" value="TraesPARA_EIv1.0_2665750.1.CDS1"/>
    <property type="gene ID" value="TraesPARA_EIv1.0_2665750"/>
</dbReference>
<dbReference type="Gramene" id="TraesPARA_EIv1.0_2666230.1">
    <property type="protein sequence ID" value="TraesPARA_EIv1.0_2666230.1.CDS1"/>
    <property type="gene ID" value="TraesPARA_EIv1.0_2666230"/>
</dbReference>
<dbReference type="Gramene" id="TraesPARA_EIv1.0_2666490.1">
    <property type="protein sequence ID" value="TraesPARA_EIv1.0_2666490.1.CDS1"/>
    <property type="gene ID" value="TraesPARA_EIv1.0_2666490"/>
</dbReference>
<dbReference type="Gramene" id="TraesPARA_EIv1.0_2666750.1">
    <property type="protein sequence ID" value="TraesPARA_EIv1.0_2666750.1.CDS1"/>
    <property type="gene ID" value="TraesPARA_EIv1.0_2666750"/>
</dbReference>
<dbReference type="Gramene" id="TraesPARA_EIv1.0_2667070.1">
    <property type="protein sequence ID" value="TraesPARA_EIv1.0_2667070.1.CDS1"/>
    <property type="gene ID" value="TraesPARA_EIv1.0_2667070"/>
</dbReference>
<dbReference type="Gramene" id="TraesPARA_EIv1.0_2668300.1">
    <property type="protein sequence ID" value="TraesPARA_EIv1.0_2668300.1.CDS1"/>
    <property type="gene ID" value="TraesPARA_EIv1.0_2668300"/>
</dbReference>
<dbReference type="Gramene" id="TraesPARA_EIv1.0_2669530.1">
    <property type="protein sequence ID" value="TraesPARA_EIv1.0_2669530.1.CDS1"/>
    <property type="gene ID" value="TraesPARA_EIv1.0_2669530"/>
</dbReference>
<dbReference type="Gramene" id="TraesPARA_EIv1.0_2670100.1">
    <property type="protein sequence ID" value="TraesPARA_EIv1.0_2670100.1.CDS1"/>
    <property type="gene ID" value="TraesPARA_EIv1.0_2670100"/>
</dbReference>
<dbReference type="Gramene" id="TraesPARA_EIv1.0_2672180.1">
    <property type="protein sequence ID" value="TraesPARA_EIv1.0_2672180.1.CDS1"/>
    <property type="gene ID" value="TraesPARA_EIv1.0_2672180"/>
</dbReference>
<dbReference type="Gramene" id="TraesPARA_EIv1.0_2672480.1">
    <property type="protein sequence ID" value="TraesPARA_EIv1.0_2672480.1.CDS1"/>
    <property type="gene ID" value="TraesPARA_EIv1.0_2672480"/>
</dbReference>
<dbReference type="Gramene" id="TraesPARA_EIv1.0_2673210.1">
    <property type="protein sequence ID" value="TraesPARA_EIv1.0_2673210.1.CDS1"/>
    <property type="gene ID" value="TraesPARA_EIv1.0_2673210"/>
</dbReference>
<dbReference type="Gramene" id="TraesPARA_EIv1.0_2673580.1">
    <property type="protein sequence ID" value="TraesPARA_EIv1.0_2673580.1.CDS1"/>
    <property type="gene ID" value="TraesPARA_EIv1.0_2673580"/>
</dbReference>
<dbReference type="Gramene" id="TraesPARA_EIv1.0_2674140.1">
    <property type="protein sequence ID" value="TraesPARA_EIv1.0_2674140.1.CDS1"/>
    <property type="gene ID" value="TraesPARA_EIv1.0_2674140"/>
</dbReference>
<dbReference type="Gramene" id="TraesPARA_EIv1.0_2674310.1">
    <property type="protein sequence ID" value="TraesPARA_EIv1.0_2674310.1.CDS1"/>
    <property type="gene ID" value="TraesPARA_EIv1.0_2674310"/>
</dbReference>
<dbReference type="Gramene" id="TraesPARA_EIv1.0_2675910.1">
    <property type="protein sequence ID" value="TraesPARA_EIv1.0_2675910.1.CDS1"/>
    <property type="gene ID" value="TraesPARA_EIv1.0_2675910"/>
</dbReference>
<dbReference type="Gramene" id="TraesPARA_EIv1.0_2677490.1">
    <property type="protein sequence ID" value="TraesPARA_EIv1.0_2677490.1.CDS1"/>
    <property type="gene ID" value="TraesPARA_EIv1.0_2677490"/>
</dbReference>
<dbReference type="Gramene" id="TraesPARA_EIv1.0_2680860.1">
    <property type="protein sequence ID" value="TraesPARA_EIv1.0_2680860.1.CDS1"/>
    <property type="gene ID" value="TraesPARA_EIv1.0_2680860"/>
</dbReference>
<dbReference type="Gramene" id="TraesPARA_EIv1.0_2681480.1">
    <property type="protein sequence ID" value="TraesPARA_EIv1.0_2681480.1.CDS1"/>
    <property type="gene ID" value="TraesPARA_EIv1.0_2681480"/>
</dbReference>
<dbReference type="Gramene" id="TraesRN1D0100499400.1">
    <property type="protein sequence ID" value="TraesRN1D0100499400.1"/>
    <property type="gene ID" value="TraesRN1D0100499400"/>
</dbReference>
<dbReference type="Gramene" id="TraesRN1D0100499600.1">
    <property type="protein sequence ID" value="TraesRN1D0100499600.1"/>
    <property type="gene ID" value="TraesRN1D0100499600"/>
</dbReference>
<dbReference type="KEGG" id="taes:803182"/>
<dbReference type="eggNOG" id="ENOG502QRYE">
    <property type="taxonomic scope" value="Eukaryota"/>
</dbReference>
<dbReference type="HOGENOM" id="CLU_016126_1_0_1"/>
<dbReference type="OrthoDB" id="15at2759"/>
<dbReference type="Proteomes" id="UP000019116">
    <property type="component" value="Chloroplast"/>
</dbReference>
<dbReference type="ExpressionAtlas" id="P58386">
    <property type="expression patterns" value="baseline"/>
</dbReference>
<dbReference type="GO" id="GO:0009535">
    <property type="term" value="C:chloroplast thylakoid membrane"/>
    <property type="evidence" value="ECO:0007669"/>
    <property type="project" value="UniProtKB-SubCell"/>
</dbReference>
<dbReference type="GO" id="GO:0009522">
    <property type="term" value="C:photosystem I"/>
    <property type="evidence" value="ECO:0007669"/>
    <property type="project" value="UniProtKB-KW"/>
</dbReference>
<dbReference type="GO" id="GO:0051539">
    <property type="term" value="F:4 iron, 4 sulfur cluster binding"/>
    <property type="evidence" value="ECO:0007669"/>
    <property type="project" value="UniProtKB-KW"/>
</dbReference>
<dbReference type="GO" id="GO:0016168">
    <property type="term" value="F:chlorophyll binding"/>
    <property type="evidence" value="ECO:0007669"/>
    <property type="project" value="UniProtKB-KW"/>
</dbReference>
<dbReference type="GO" id="GO:0009055">
    <property type="term" value="F:electron transfer activity"/>
    <property type="evidence" value="ECO:0007669"/>
    <property type="project" value="UniProtKB-UniRule"/>
</dbReference>
<dbReference type="GO" id="GO:0000287">
    <property type="term" value="F:magnesium ion binding"/>
    <property type="evidence" value="ECO:0007669"/>
    <property type="project" value="UniProtKB-UniRule"/>
</dbReference>
<dbReference type="GO" id="GO:0016491">
    <property type="term" value="F:oxidoreductase activity"/>
    <property type="evidence" value="ECO:0007669"/>
    <property type="project" value="UniProtKB-KW"/>
</dbReference>
<dbReference type="GO" id="GO:0015979">
    <property type="term" value="P:photosynthesis"/>
    <property type="evidence" value="ECO:0007669"/>
    <property type="project" value="UniProtKB-UniRule"/>
</dbReference>
<dbReference type="FunFam" id="1.20.1130.10:FF:000001">
    <property type="entry name" value="Photosystem I P700 chlorophyll a apoprotein A2"/>
    <property type="match status" value="1"/>
</dbReference>
<dbReference type="Gene3D" id="1.20.1130.10">
    <property type="entry name" value="Photosystem I PsaA/PsaB"/>
    <property type="match status" value="1"/>
</dbReference>
<dbReference type="HAMAP" id="MF_00482">
    <property type="entry name" value="PSI_PsaB"/>
    <property type="match status" value="1"/>
</dbReference>
<dbReference type="InterPro" id="IPR001280">
    <property type="entry name" value="PSI_PsaA/B"/>
</dbReference>
<dbReference type="InterPro" id="IPR020586">
    <property type="entry name" value="PSI_PsaA/B_CS"/>
</dbReference>
<dbReference type="InterPro" id="IPR036408">
    <property type="entry name" value="PSI_PsaA/B_sf"/>
</dbReference>
<dbReference type="InterPro" id="IPR006244">
    <property type="entry name" value="PSI_PsaB"/>
</dbReference>
<dbReference type="NCBIfam" id="TIGR01336">
    <property type="entry name" value="psaB"/>
    <property type="match status" value="1"/>
</dbReference>
<dbReference type="PANTHER" id="PTHR30128">
    <property type="entry name" value="OUTER MEMBRANE PROTEIN, OMPA-RELATED"/>
    <property type="match status" value="1"/>
</dbReference>
<dbReference type="PANTHER" id="PTHR30128:SF19">
    <property type="entry name" value="PHOTOSYSTEM I P700 CHLOROPHYLL A APOPROTEIN A1-RELATED"/>
    <property type="match status" value="1"/>
</dbReference>
<dbReference type="Pfam" id="PF00223">
    <property type="entry name" value="PsaA_PsaB"/>
    <property type="match status" value="1"/>
</dbReference>
<dbReference type="PIRSF" id="PIRSF002905">
    <property type="entry name" value="PSI_A"/>
    <property type="match status" value="1"/>
</dbReference>
<dbReference type="PRINTS" id="PR00257">
    <property type="entry name" value="PHOTSYSPSAAB"/>
</dbReference>
<dbReference type="SUPFAM" id="SSF81558">
    <property type="entry name" value="Photosystem I subunits PsaA/PsaB"/>
    <property type="match status" value="1"/>
</dbReference>
<dbReference type="PROSITE" id="PS00419">
    <property type="entry name" value="PHOTOSYSTEM_I_PSAAB"/>
    <property type="match status" value="1"/>
</dbReference>
<accession>P58386</accession>
<keyword id="KW-0004">4Fe-4S</keyword>
<keyword id="KW-0148">Chlorophyll</keyword>
<keyword id="KW-0150">Chloroplast</keyword>
<keyword id="KW-0157">Chromophore</keyword>
<keyword id="KW-0249">Electron transport</keyword>
<keyword id="KW-0408">Iron</keyword>
<keyword id="KW-0411">Iron-sulfur</keyword>
<keyword id="KW-0460">Magnesium</keyword>
<keyword id="KW-0472">Membrane</keyword>
<keyword id="KW-0479">Metal-binding</keyword>
<keyword id="KW-0560">Oxidoreductase</keyword>
<keyword id="KW-0602">Photosynthesis</keyword>
<keyword id="KW-0603">Photosystem I</keyword>
<keyword id="KW-0934">Plastid</keyword>
<keyword id="KW-1185">Reference proteome</keyword>
<keyword id="KW-0793">Thylakoid</keyword>
<keyword id="KW-0812">Transmembrane</keyword>
<keyword id="KW-1133">Transmembrane helix</keyword>
<keyword id="KW-0813">Transport</keyword>
<reference key="1">
    <citation type="journal article" date="2000" name="Plant Mol. Biol. Rep.">
        <title>Chinese spring wheat (Triticum aestivum L.) chloroplast genome: complete sequence and contig clones.</title>
        <authorList>
            <person name="Ogihara Y."/>
            <person name="Isono K."/>
            <person name="Kojima T."/>
            <person name="Endo A."/>
            <person name="Hanaoka M."/>
            <person name="Shiina T."/>
            <person name="Terachi T."/>
            <person name="Utsugi S."/>
            <person name="Murata M."/>
            <person name="Mori N."/>
            <person name="Takumi S."/>
            <person name="Ikeo K."/>
            <person name="Gojobori T."/>
            <person name="Murai R."/>
            <person name="Murai K."/>
            <person name="Matsuoka Y."/>
            <person name="Ohnishi Y."/>
            <person name="Tajiri H."/>
            <person name="Tsunewaki K."/>
        </authorList>
    </citation>
    <scope>NUCLEOTIDE SEQUENCE [LARGE SCALE GENOMIC DNA]</scope>
    <source>
        <strain>cv. Chinese Spring</strain>
    </source>
</reference>
<comment type="function">
    <text evidence="1">PsaA and PsaB bind P700, the primary electron donor of photosystem I (PSI), as well as the electron acceptors A0, A1 and FX. PSI is a plastocyanin-ferredoxin oxidoreductase, converting photonic excitation into a charge separation, which transfers an electron from the donor P700 chlorophyll pair to the spectroscopically characterized acceptors A0, A1, FX, FA and FB in turn. Oxidized P700 is reduced on the lumenal side of the thylakoid membrane by plastocyanin.</text>
</comment>
<comment type="catalytic activity">
    <reaction evidence="1">
        <text>reduced [plastocyanin] + hnu + oxidized [2Fe-2S]-[ferredoxin] = oxidized [plastocyanin] + reduced [2Fe-2S]-[ferredoxin]</text>
        <dbReference type="Rhea" id="RHEA:30407"/>
        <dbReference type="Rhea" id="RHEA-COMP:10000"/>
        <dbReference type="Rhea" id="RHEA-COMP:10001"/>
        <dbReference type="Rhea" id="RHEA-COMP:10039"/>
        <dbReference type="Rhea" id="RHEA-COMP:10040"/>
        <dbReference type="ChEBI" id="CHEBI:29036"/>
        <dbReference type="ChEBI" id="CHEBI:30212"/>
        <dbReference type="ChEBI" id="CHEBI:33737"/>
        <dbReference type="ChEBI" id="CHEBI:33738"/>
        <dbReference type="ChEBI" id="CHEBI:49552"/>
        <dbReference type="EC" id="1.97.1.12"/>
    </reaction>
</comment>
<comment type="cofactor">
    <text evidence="1">P700 is a chlorophyll a/chlorophyll a' dimer, A0 is one or more chlorophyll a, A1 is one or both phylloquinones and FX is a shared 4Fe-4S iron-sulfur center.</text>
</comment>
<comment type="subunit">
    <text evidence="1">The PsaA/B heterodimer binds the P700 chlorophyll special pair and subsequent electron acceptors. PSI consists of a core antenna complex that captures photons, and an electron transfer chain that converts photonic excitation into a charge separation. The eukaryotic PSI reaction center is composed of at least 11 subunits.</text>
</comment>
<comment type="subcellular location">
    <subcellularLocation>
        <location evidence="1">Plastid</location>
        <location evidence="1">Chloroplast thylakoid membrane</location>
        <topology evidence="1">Multi-pass membrane protein</topology>
    </subcellularLocation>
</comment>
<comment type="similarity">
    <text evidence="1">Belongs to the PsaA/PsaB family.</text>
</comment>
<feature type="chain" id="PRO_0000088640" description="Photosystem I P700 chlorophyll a apoprotein A2">
    <location>
        <begin position="1"/>
        <end position="734"/>
    </location>
</feature>
<feature type="transmembrane region" description="Helical; Name=I" evidence="1">
    <location>
        <begin position="46"/>
        <end position="69"/>
    </location>
</feature>
<feature type="transmembrane region" description="Helical; Name=II" evidence="1">
    <location>
        <begin position="135"/>
        <end position="158"/>
    </location>
</feature>
<feature type="transmembrane region" description="Helical; Name=III" evidence="1">
    <location>
        <begin position="175"/>
        <end position="199"/>
    </location>
</feature>
<feature type="transmembrane region" description="Helical; Name=IV" evidence="1">
    <location>
        <begin position="273"/>
        <end position="291"/>
    </location>
</feature>
<feature type="transmembrane region" description="Helical; Name=V" evidence="1">
    <location>
        <begin position="330"/>
        <end position="353"/>
    </location>
</feature>
<feature type="transmembrane region" description="Helical; Name=VI" evidence="1">
    <location>
        <begin position="369"/>
        <end position="395"/>
    </location>
</feature>
<feature type="transmembrane region" description="Helical; Name=VII" evidence="1">
    <location>
        <begin position="417"/>
        <end position="439"/>
    </location>
</feature>
<feature type="transmembrane region" description="Helical; Name=VIII" evidence="1">
    <location>
        <begin position="517"/>
        <end position="535"/>
    </location>
</feature>
<feature type="transmembrane region" description="Helical; Name=IX" evidence="1">
    <location>
        <begin position="575"/>
        <end position="596"/>
    </location>
</feature>
<feature type="transmembrane region" description="Helical; Name=X" evidence="1">
    <location>
        <begin position="643"/>
        <end position="665"/>
    </location>
</feature>
<feature type="transmembrane region" description="Helical; Name=XI" evidence="1">
    <location>
        <begin position="707"/>
        <end position="727"/>
    </location>
</feature>
<feature type="binding site" evidence="1">
    <location>
        <position position="559"/>
    </location>
    <ligand>
        <name>[4Fe-4S] cluster</name>
        <dbReference type="ChEBI" id="CHEBI:49883"/>
        <note>ligand shared between dimeric partners</note>
    </ligand>
</feature>
<feature type="binding site" evidence="1">
    <location>
        <position position="568"/>
    </location>
    <ligand>
        <name>[4Fe-4S] cluster</name>
        <dbReference type="ChEBI" id="CHEBI:49883"/>
        <note>ligand shared between dimeric partners</note>
    </ligand>
</feature>
<feature type="binding site" description="axial binding residue" evidence="1">
    <location>
        <position position="654"/>
    </location>
    <ligand>
        <name>chlorophyll a</name>
        <dbReference type="ChEBI" id="CHEBI:58416"/>
        <label>B1</label>
    </ligand>
    <ligandPart>
        <name>Mg</name>
        <dbReference type="ChEBI" id="CHEBI:25107"/>
    </ligandPart>
</feature>
<feature type="binding site" description="axial binding residue" evidence="1">
    <location>
        <position position="662"/>
    </location>
    <ligand>
        <name>chlorophyll a</name>
        <dbReference type="ChEBI" id="CHEBI:58416"/>
        <label>B3</label>
    </ligand>
    <ligandPart>
        <name>Mg</name>
        <dbReference type="ChEBI" id="CHEBI:25107"/>
    </ligandPart>
</feature>
<feature type="binding site" evidence="1">
    <location>
        <position position="670"/>
    </location>
    <ligand>
        <name>chlorophyll a</name>
        <dbReference type="ChEBI" id="CHEBI:58416"/>
        <label>B3</label>
    </ligand>
</feature>
<feature type="binding site" evidence="1">
    <location>
        <position position="671"/>
    </location>
    <ligand>
        <name>phylloquinone</name>
        <dbReference type="ChEBI" id="CHEBI:18067"/>
        <label>B</label>
    </ligand>
</feature>